<sequence length="3391" mass="379501">MNNQRKKARNTPFNMLKRERNRVSTVQQLTKRFSLGMLQGRGPLKLFMALVAFLRFLTIPPTAGILKRWGTIKKSKAINVLRGFRKEIGRMLNILNRRRRTAGMIIMLIPTVMAFHLTTRNGEPHMIVSRQEKGKSLLFKTEDGVNMCTLMAMDLGELCEDTITYKCPFLKQNEPEDIDCWCNSTSTWVTYGTCTTTGEHRREKRSVALVPHVGMGLETRTETWMSSEGAWKHAQRIETWILRHPGFTIMAAILAYTIGTTHFQRALIFILLTAVAPSMTMRCIGISNRDFVEGVSGGSWVDIVLEHGSCVTTMAKNKPTLDFELIETEAKQPATLRKYCIEAKLTNTTTDSRCPTQGEPSLNEEQDKRFVCKHSMVDRGWGNGCGLFGKGGIVTCAMFTCKKNMKGKVVQPENLEYTIVITPHSGEEHAVGNDTGKHGKEIKITPQSSITEAELTGYGTVTMECSPRTGLDFNEMVLLQMENKAWLVHRQWFLDLPLPWLPGADTQGSNWIQKETLVTFKNPHAKKQDVVVLGSQEGAMHTALTGATEIQMSSGNLLFTGHLKCRLRMDKLQLKGMSYSMCTGKFKVVKEIAETQHGTIVIRVQYEGDGSPCKIPFEIMDLEKRHVLGRLITVNPIVTEKDSPVNIEAEPPFGDSYIIIGVEPGQLKLNWFKKGSSIGQMIETTMRGAKRMAILGDTAWDFGSLGGVFTSIGKALHQVFGAIYGAAFSGVSWIMKILIGVIITWIGMNSRSTSLSVSLVLVGVVTLYLGVMVQADSGCVVSWKNKELKCGSGIFITDNVHTWTEQYKFQPESPSKLASAIQKAHEEGICGIRSVTRLENLMWKQITPELNHILSENEVKLTIMTGDIKGIMQAGKRSLQPQPTELKYSWKTWGKAKMLSTESHNQTFLIDGPETAECPNTNRAWNSLEVEDYGFGVFTTNIWLKLREKQDVFCDSKLMSAAIKDNRAVHADMGYWIESALNDTWKIEKASFIEVKSCHWPKSHTLWSNGVLESEMIIPKNFAGPVSQHNYRPGYHTQTAGPWHLGKLEMDFDFCEGTTVVVTEDCGNRGPSLRTTTASGKLITEWCCRSCTLPPLRYRGEDGCWYGMEIRPLKEKEENLVNSLVTAGHGQIDNFSLGVLGMALFLEEMLRTRVGTKHAILLVAVSFVTLITGNMSFRDLGRVMVMVGATMTDDIGMGVTYLALLAAFKVRPTFAAGLLLRKLTSKELMMTTIGIVLLSQSTIPETILELTDALALGMMVLKMVRKMEKYQLAVTIMAILCVPNAVILQNAWKVSCTILAVVSVSPLFLTSSQQKADWIPLALTIKGLNPTAIFLTTLSRTNKKRSWPLNEAIMAVGMVSILASSLLKNDIPMTGPLVAGGLLTVCYVLTGRSADLELERAADVKWEDQAEISGSSPILSITISEDGSMSIKNEEEEQTLTILIRTGLLVISGLFPVSIPITAAAWYLWEVKKQRAGVLWDVPSPPPVGKAELEDGAYRIKQKGILGYSQIGAGVYKEGTFHTMWHVTRGAVLMHKGKRIEPSWADVKKDLISYGGGWKLEGEWKEGEEVQVLALEPGKNPRAVQTKPGLFKTNAGTIGAVSLDFSPGTSGSPIIDKKGKVVGLYGNGVVTRSGAYVSAIAQTEKSIEDNPEIEDDIFRKRKLTIMDLHPGAGKTKRYLPAIVREAIKRGLRTLILAPTRVVAAEMEEALRGLPIRYQTPAIRAEHTGREIVDLMCHATFTMRLLSPVRVPNYNLIIMDEAHFTDPASIAARGYISTRVEMGEAAGIFMTATPPGSRDPFPQSNAPIMDEEREIPERSWSSGHEWVTDFKGKTVWFVPSIKAGNDIAACLRKNGKKVIQLSRKTFDSEYVKTRTNDWDFVVTTDISEMGANFKAERVIDPRRCMKPVILTDGEERVILAGPMPVTHSSAAQRRGRIGRNPKNENDQYIYMGEPLENDEDCAHWKEAKMLLDNINTPEGIIPSMFEPEREKVDAIDGEYRLRGEARKTFVDLMRRGDLPVWLAYRVAAEGINYADRRWCFDGIKNNQILEENVEVEIWTKEGERKKLKPRWLDAKIYSDPLALKEFKEFAAGRKSLTLNLITEMGRLPTFMTQKARDALDNLAVLHTAEAGGRAYNHALSELPETLETLLLLTLLATVTGGIFLFLMSGRGIGKMTLGMCCIITASILLWYAQIQPHWIAASIILEFFLIVLLIPEPEKQRTPQDNQLTYVVIAILTVVAATMANEMGFLEKTKKDLGLGSITTQQPESNILDIDLRPASAWTLYAVATTFVTPMLRHSIENSSVNVSLTAIANQATVLMGLGKGWPLSKMDIGVPLLAIGCYSQVNPITLTAALFLLVAHYAIIGPGLQAKATREAQKRAAAGIMKNPTVDGITVIDLDPIPYDPKFEKQLGQVMLLVLCVTQVLMMRTTWALCEALTLATGPISTLWEGNPGRFWNTTIAVSMANIFRGSYLAGAGLLFSIMKNTTNTRRGTGNIGETLGEKWKSRLNALGKSEFQIYKKSGIQEVDRTLAKEGIKRGETDHHAVSRGSAKLRWFVERNMVTPEGKVVDLGCGRGGWSYYCGGLKNVREVKGLTKGGPGHEEPIPMSTYGWNLVRLQSGVDVFFTPPEKCDTLLCDIGESSPNPTVEAGRTLRVLNLVENWLNNNTQFCIKVLNPYMPSVIEKMEALQRKYGGALVRNPLSRNSTHEMYWLSNASGNIVSSVNMISRMLINRFTMRHKKATYEPDVDLGSGTRNIGIESEIPNLDIIGKRIEKIKQEHETSWHYDQDHPYKTWAYHGSYETKQTGSASSMGNGVVRLLTKPWDVVPMVTQMAMTDTTPFGQQRVFKEKVDTRTQEPKEGTKKLMKITAEWLWKELGKKKTPRMCTREEFTRKVRSNAALGAIFTDENKWKSAREAVEDSRFWELVDKERNLHLEGKCETCVYNMMGKREKKLGEFGKAKGSRAIWYMWLGARFLEFEALGFLNEDHWFSRENSLSGVEGEGLHKLGYILRDVSKKEGGAMYADDTAGWDTRITLEDLKNEEMVTNHMEGEHKKLAEAIFKLTYQNKVVRVQRPTPRGTVMDIISRRDQRGSGQVGTYGLNTFTNMEAQLIRQMEGEGVFKSIQHLTVTEEIAVQNWLARVGRERLSRMAISGDDCVVKPLDDRFASALTALNDMGKVRKDIQQWEPSRGWNDWTQVPFCSHHFHELIMKDGRVLVVPCRNQDELIGRARISQGAGWSLRETACLGKSYAQMWSLMYFHRRDLRLAANAICSAVPSHWVPTSRTTWSIHAKHEWMTTEDMLTVWNRVWIQENPWMEDKTPVESWEEIPYLGKREDQWCGSLIGLTSRATWAKNIQTAINQVRSLIGNEEYTDYMPSMKRFRKEEEEAGVLW</sequence>
<comment type="function">
    <molecule>Capsid protein C</molecule>
    <text evidence="4">Plays a role in virus budding by binding to the cell membrane and gathering the viral RNA into a nucleocapsid that forms the core of a mature virus particle. During virus entry, may induce genome penetration into the host cytoplasm after hemifusion induced by the surface proteins. Can migrate to the cell nucleus where it modulates host functions. Overcomes the anti-viral effects of host EXOC1 by sequestering and degrading the latter through the proteasome degradation pathway.</text>
</comment>
<comment type="function">
    <molecule>Capsid protein C</molecule>
    <text evidence="1">Inhibits RNA silencing by interfering with host Dicer.</text>
</comment>
<comment type="function">
    <molecule>Peptide pr</molecule>
    <text evidence="4">Prevents premature fusion activity of envelope proteins in trans-Golgi by binding to envelope protein E at pH6.0. After virion release in extracellular space, gets dissociated from E dimers.</text>
</comment>
<comment type="function">
    <molecule>Protein prM</molecule>
    <text evidence="4">Acts as a chaperone for envelope protein E during intracellular virion assembly by masking and inactivating envelope protein E fusion peptide. prM is the only viral peptide matured by host furin in the trans-Golgi network probably to avoid catastrophic activation of the viral fusion activity in acidic Golgi compartment prior to virion release. prM-E cleavage is inefficient, and many virions are only partially matured. These uncleaved prM would play a role in immune evasion.</text>
</comment>
<comment type="function">
    <molecule>Small envelope protein M</molecule>
    <text evidence="4">May play a role in virus budding. Exerts cytotoxic effects by activating a mitochondrial apoptotic pathway through M ectodomain. May display a viroporin activity.</text>
</comment>
<comment type="function">
    <molecule>Envelope protein E</molecule>
    <text evidence="4">Binds to host cell surface receptor and mediates fusion between viral and cellular membranes. Envelope protein is synthesized in the endoplasmic reticulum in the form of heterodimer with protein prM. They play a role in virion budding in the ER, and the newly formed immature particle is covered with 60 spikes composed of heterodimer between precursor prM and envelope protein E. The virion is transported to the Golgi apparatus where the low pH causes dissociation of PrM-E heterodimers and formation of E homodimers. prM-E cleavage is inefficient, and many virions are only partially matured. These uncleaved prM would play a role in immune evasion.</text>
</comment>
<comment type="function">
    <molecule>Non-structural protein 1</molecule>
    <text evidence="4 5">Involved in immune evasion, pathogenesis and viral replication. Once cleaved off the polyprotein, is targeted to three destinations: the viral replication cycle, the plasma membrane and the extracellular compartment. Essential for viral replication. Required for formation of the replication complex and recruitment of other non-structural proteins to the ER-derived membrane structures. Excreted as a hexameric lipoparticle that plays a role against host immune response. Antagonizing the complement function. Binds to the host macrophages and dendritic cells. Inhibits signal transduction originating from Toll-like receptor 3 (TLR3). Mediates complement activation, which may contribute to the pathogenesis of the vascular leakage that occurs in severe dengue disease. Activates autophagy through the AMPK/ERK/mTOR signaling pathway. Mechanistically, acts as the assembly platform for STK11-AMPK interactions and promotes STK11-AMPK interactions. In turn, promotes phosphorylation of the AMPK kinase structural domain and activates AMPK, thereby positively regulating the AMPK/ERK/mTOR signaling pathway and inducing autophagy.</text>
</comment>
<comment type="function">
    <molecule>Non-structural protein 1</molecule>
    <text evidence="4">Disrupts the host endothelial glycocalyx layer of host pulmonary microvascular endothelial cells, inducing degradation of sialic acid and shedding of heparan sulfate proteoglycans. NS1 induces expression of sialidases, heparanase, and activates cathepsin L, which activates heparanase via enzymatic cleavage. These effects are probably linked to the endothelial hyperpermeability observed in severe dengue disease.</text>
</comment>
<comment type="function">
    <molecule>Non-structural protein 2A</molecule>
    <text evidence="4">Component of the viral RNA replication complex that functions in virion assembly and antagonizes the host immune response.</text>
</comment>
<comment type="function">
    <molecule>Serine protease subunit NS2B</molecule>
    <text evidence="4 15">Required cofactor for the serine protease function of NS3. May have membrane-destabilizing activity and form viroporins (By similarity).</text>
</comment>
<comment type="function">
    <molecule>Serine protease NS3</molecule>
    <text evidence="16">Displays three enzymatic activities: serine protease, NTPase and RNA helicase. NS3 serine protease, in association with NS2B, performs its autocleavage and cleaves the polyprotein at dibasic sites in the cytoplasm: C-prM, NS2A-NS2B, NS2B-NS3, NS3-NS4A, NS4A-2K and NS4B-NS5. NS3 RNA helicase binds RNA and unwinds dsRNA in the 3' to 5' direction.</text>
</comment>
<comment type="function">
    <molecule>Non-structural protein 4A</molecule>
    <text evidence="4 6 20">Regulates the ATPase activity of the NS3 helicase activity. NS4A allows NS3 helicase to conserve energy during unwinding. Plays a role in the inhibition of the host innate immune response. Interacts with host MAVS and thereby prevents the interaction between RIGI and MAVS. In turn, IFN-beta production is impaired. Interacts with host AUP1 which mediates induction of lipophagy in host cells and facilitates production of virus progeny particles (By similarity).</text>
</comment>
<comment type="function">
    <molecule>Peptide 2k</molecule>
    <text evidence="4">Functions as a signal peptide for NS4B and is required for the interferon antagonism activity of the latter.</text>
</comment>
<comment type="function">
    <molecule>Non-structural protein 4B</molecule>
    <text evidence="9">Induces the formation of ER-derived membrane vesicles where the viral replication takes place. Inhibits interferon (IFN)-induced host STAT1 phosphorylation and nuclear translocation, thereby preventing the establishment of cellular antiviral state by blocking the IFN-alpha/beta pathway.</text>
</comment>
<comment type="function">
    <molecule>RNA-directed RNA polymerase NS5</molecule>
    <text evidence="4 5">Replicates the viral (+) and (-) RNA genome, and performs the capping of genomes in the cytoplasm. NS5 methylates viral RNA cap at guanine N-7 and ribose 2'-O positions. Besides its role in RNA genome replication, also prevents the establishment of cellular antiviral state by blocking the interferon-alpha/beta (IFN-alpha/beta) signaling pathway. Inhibits host TYK2 and STAT2 phosphorylation, thereby preventing activation of JAK-STAT signaling pathway (By similarity). May reduce immune responses by preventing the recruitment of the host PAF1 complex to interferon-responsive genes (By similarity).</text>
</comment>
<comment type="catalytic activity">
    <reaction>
        <text>Selective hydrolysis of -Xaa-Xaa-|-Yaa- bonds in which each of the Xaa can be either Arg or Lys and Yaa can be either Ser or Ala.</text>
        <dbReference type="EC" id="3.4.21.91"/>
    </reaction>
</comment>
<comment type="catalytic activity">
    <reaction evidence="12">
        <text>RNA(n) + a ribonucleoside 5'-triphosphate = RNA(n+1) + diphosphate</text>
        <dbReference type="Rhea" id="RHEA:21248"/>
        <dbReference type="Rhea" id="RHEA-COMP:14527"/>
        <dbReference type="Rhea" id="RHEA-COMP:17342"/>
        <dbReference type="ChEBI" id="CHEBI:33019"/>
        <dbReference type="ChEBI" id="CHEBI:61557"/>
        <dbReference type="ChEBI" id="CHEBI:140395"/>
        <dbReference type="EC" id="2.7.7.48"/>
    </reaction>
</comment>
<comment type="catalytic activity">
    <reaction evidence="18">
        <text>a ribonucleoside 5'-triphosphate + H2O = a ribonucleoside 5'-diphosphate + phosphate + H(+)</text>
        <dbReference type="Rhea" id="RHEA:23680"/>
        <dbReference type="ChEBI" id="CHEBI:15377"/>
        <dbReference type="ChEBI" id="CHEBI:15378"/>
        <dbReference type="ChEBI" id="CHEBI:43474"/>
        <dbReference type="ChEBI" id="CHEBI:57930"/>
        <dbReference type="ChEBI" id="CHEBI:61557"/>
        <dbReference type="EC" id="3.6.1.15"/>
    </reaction>
</comment>
<comment type="catalytic activity">
    <reaction evidence="18">
        <text>ATP + H2O = ADP + phosphate + H(+)</text>
        <dbReference type="Rhea" id="RHEA:13065"/>
        <dbReference type="ChEBI" id="CHEBI:15377"/>
        <dbReference type="ChEBI" id="CHEBI:15378"/>
        <dbReference type="ChEBI" id="CHEBI:30616"/>
        <dbReference type="ChEBI" id="CHEBI:43474"/>
        <dbReference type="ChEBI" id="CHEBI:456216"/>
        <dbReference type="EC" id="3.6.4.13"/>
    </reaction>
</comment>
<comment type="catalytic activity">
    <reaction evidence="17">
        <text>a 5'-end (5'-triphosphoguanosine)-ribonucleoside in mRNA + S-adenosyl-L-methionine = a 5'-end (N(7)-methyl 5'-triphosphoguanosine)-ribonucleoside in mRNA + S-adenosyl-L-homocysteine</text>
        <dbReference type="Rhea" id="RHEA:67008"/>
        <dbReference type="Rhea" id="RHEA-COMP:17166"/>
        <dbReference type="Rhea" id="RHEA-COMP:17167"/>
        <dbReference type="ChEBI" id="CHEBI:57856"/>
        <dbReference type="ChEBI" id="CHEBI:59789"/>
        <dbReference type="ChEBI" id="CHEBI:156461"/>
        <dbReference type="ChEBI" id="CHEBI:167617"/>
        <dbReference type="EC" id="2.1.1.56"/>
    </reaction>
</comment>
<comment type="catalytic activity">
    <reaction evidence="17">
        <text>a 5'-end (N(7)-methyl 5'-triphosphoguanosine)-ribonucleoside in mRNA + S-adenosyl-L-methionine = a 5'-end (N(7)-methyl 5'-triphosphoguanosine)-(2'-O-methyl-ribonucleoside) in mRNA + S-adenosyl-L-homocysteine + H(+)</text>
        <dbReference type="Rhea" id="RHEA:67020"/>
        <dbReference type="Rhea" id="RHEA-COMP:17167"/>
        <dbReference type="Rhea" id="RHEA-COMP:17168"/>
        <dbReference type="ChEBI" id="CHEBI:15378"/>
        <dbReference type="ChEBI" id="CHEBI:57856"/>
        <dbReference type="ChEBI" id="CHEBI:59789"/>
        <dbReference type="ChEBI" id="CHEBI:156461"/>
        <dbReference type="ChEBI" id="CHEBI:167609"/>
        <dbReference type="EC" id="2.1.1.57"/>
    </reaction>
</comment>
<comment type="biophysicochemical properties">
    <kinetics>
        <KM evidence="18">29.3 uM for triphosphorylated RNA</KM>
        <text evidence="18">Vmax with 0.65 nmol/s/ug enzyme for RTPase activity with triphosphorylated RNA as substrate.</text>
    </kinetics>
</comment>
<comment type="subunit">
    <molecule>Capsid protein C</molecule>
    <text evidence="4">Homodimer (By similarity). Interacts (via N-terminus) with host EXOC1 (via C-terminus); this interaction results in EXOC1 degradation through the proteasome degradation pathway (By similarity).</text>
</comment>
<comment type="subunit">
    <molecule>Protein prM</molecule>
    <text evidence="4">Forms heterodimers with envelope protein E in the endoplasmic reticulum and Golgi (By similarity).</text>
</comment>
<comment type="subunit">
    <molecule>Envelope protein E</molecule>
    <text evidence="4">Homodimer; in the endoplasmic reticulum and Golgi (By similarity). Interacts with protein prM (By similarity). Interacts with non-structural protein 1.</text>
</comment>
<comment type="subunit">
    <molecule>Non-structural protein 1</molecule>
    <text evidence="4 5">Homodimer; Homohexamer when secreted. Interacts with envelope protein E (By similarity). Interacts with host PRKAA1 (By similarity).</text>
</comment>
<comment type="subunit">
    <molecule>Non-structural protein 2A</molecule>
    <text evidence="4">Interacts (via N-terminus) with serine protease NS3 (By similarity).</text>
</comment>
<comment type="subunit">
    <molecule>Serine protease subunit NS2B</molecule>
    <text evidence="4">Forms a heterodimer with serine protease NS3 (By similarity). May form homooligomers (By similarity).</text>
</comment>
<comment type="subunit">
    <molecule>Serine protease NS3</molecule>
    <text evidence="4 18">Forms a heterodimer with NS2B (By similarity). Interacts with NS4B (By similarity). Interacts with unphosphorylated RNA-directed RNA polymerase NS5; this interaction stimulates RNA-directed RNA polymerase NS5 guanylyltransferase activity (PubMed:15917225). Interacts with host SHFL (By similarity).</text>
</comment>
<comment type="subunit">
    <molecule>Non-structural protein 4A</molecule>
    <text evidence="4 5 6">Interacts with host MAVS; this interaction inhibits the synthesis of IFN-beta (By similarity). Interacts with host MAVS; this interaction inhibits the synthesis of IFN-beta. Interacts with host SHFL (By similarity). Interacts with host AUP1; the interaction occurs in the presence of Dengue virus NS4B and induces lipophagy which facilitates production of virus progeny particles (By similarity). May interact with host SRPRA and SEC61G (By similarity).</text>
</comment>
<comment type="subunit">
    <molecule>Non-structural protein 4B</molecule>
    <text evidence="4">Interacts with serine protease NS (By similarity).</text>
</comment>
<comment type="subunit">
    <molecule>RNA-directed RNA polymerase NS5</molecule>
    <text evidence="5 18">Homodimer (By similarity). Interacts with host STAT2; this interaction inhibits the phosphorylation of the latter, and, when all viral proteins are present (polyprotein), targets STAT2 for degradation (By similarity). Interacts with serine protease NS3 (PubMed:15917225). Interacts with host PAF1 complex; the interaction may prevent the recruitment of the PAF1 complex to interferon-responsive genes, and thus reduces the immune response (By similarity).</text>
</comment>
<comment type="interaction">
    <interactant intactId="EBI-465733">
        <id>P14340</id>
    </interactant>
    <interactant intactId="EBI-307386">
        <id>P25963</id>
        <label>NFKBIA</label>
    </interactant>
    <organismsDiffer>true</organismsDiffer>
    <experiments>2</experiments>
</comment>
<comment type="interaction">
    <interactant intactId="EBI-465733">
        <id>P14340</id>
    </interactant>
    <interactant intactId="EBI-352889">
        <id>Q15653</id>
        <label>NFKBIB</label>
    </interactant>
    <organismsDiffer>true</organismsDiffer>
    <experiments>2</experiments>
</comment>
<comment type="interaction">
    <interactant intactId="EBI-465733">
        <id>P14340</id>
    </interactant>
    <interactant intactId="EBI-749731">
        <id>Q9UHY1</id>
        <label>NRBP1</label>
    </interactant>
    <organismsDiffer>true</organismsDiffer>
    <experiments>4</experiments>
</comment>
<comment type="interaction">
    <interactant intactId="EBI-9825968">
        <id>PRO_0000037965</id>
    </interactant>
    <interactant intactId="EBI-2462104">
        <id>P55265</id>
        <label>ADAR</label>
    </interactant>
    <organismsDiffer>true</organismsDiffer>
    <experiments>2</experiments>
</comment>
<comment type="interaction">
    <interactant intactId="EBI-9825968">
        <id>PRO_0000037965</id>
    </interactant>
    <interactant intactId="EBI-307386">
        <id>P25963</id>
        <label>NFKBIA</label>
    </interactant>
    <organismsDiffer>true</organismsDiffer>
    <experiments>2</experiments>
</comment>
<comment type="interaction">
    <interactant intactId="EBI-9825968">
        <id>PRO_0000037965</id>
    </interactant>
    <interactant intactId="EBI-352889">
        <id>Q15653</id>
        <label>NFKBIB</label>
    </interactant>
    <organismsDiffer>true</organismsDiffer>
    <experiments>2</experiments>
</comment>
<comment type="interaction">
    <interactant intactId="EBI-9844509">
        <id>PRO_0000037966</id>
    </interactant>
    <interactant intactId="EBI-353844">
        <id>P08670</id>
        <label>VIM</label>
    </interactant>
    <organismsDiffer>true</organismsDiffer>
    <experiments>10</experiments>
</comment>
<comment type="subcellular location">
    <molecule>Capsid protein C</molecule>
    <subcellularLocation>
        <location evidence="4">Virion</location>
    </subcellularLocation>
    <subcellularLocation>
        <location evidence="4">Host nucleus</location>
    </subcellularLocation>
    <subcellularLocation>
        <location evidence="4">Host cytoplasm</location>
    </subcellularLocation>
    <subcellularLocation>
        <location evidence="4">Host cytoplasm</location>
        <location evidence="4">Host perinuclear region</location>
    </subcellularLocation>
</comment>
<comment type="subcellular location">
    <molecule>Peptide pr</molecule>
    <subcellularLocation>
        <location evidence="4">Secreted</location>
    </subcellularLocation>
</comment>
<comment type="subcellular location">
    <molecule>Small envelope protein M</molecule>
    <subcellularLocation>
        <location evidence="4">Virion membrane</location>
        <topology evidence="10">Multi-pass membrane protein</topology>
    </subcellularLocation>
    <subcellularLocation>
        <location evidence="4">Host endoplasmic reticulum membrane</location>
        <topology evidence="10">Multi-pass membrane protein</topology>
    </subcellularLocation>
</comment>
<comment type="subcellular location">
    <molecule>Envelope protein E</molecule>
    <subcellularLocation>
        <location evidence="4">Virion membrane</location>
        <topology evidence="10">Multi-pass membrane protein</topology>
    </subcellularLocation>
    <subcellularLocation>
        <location evidence="4">Host endoplasmic reticulum membrane</location>
        <topology evidence="10">Multi-pass membrane protein</topology>
    </subcellularLocation>
</comment>
<comment type="subcellular location">
    <molecule>Non-structural protein 1</molecule>
    <subcellularLocation>
        <location evidence="4">Secreted</location>
    </subcellularLocation>
    <subcellularLocation>
        <location evidence="5">Host cytoplasm</location>
    </subcellularLocation>
    <subcellularLocation>
        <location>Host endoplasmic reticulum membrane</location>
        <topology>Peripheral membrane protein</topology>
        <orientation evidence="4">Lumenal side</orientation>
    </subcellularLocation>
    <text evidence="9">Located in RE-derived vesicles hosting the replication complex.</text>
</comment>
<comment type="subcellular location">
    <molecule>Non-structural protein 2A</molecule>
    <subcellularLocation>
        <location evidence="21">Host endoplasmic reticulum membrane</location>
        <topology evidence="21">Multi-pass membrane protein</topology>
    </subcellularLocation>
</comment>
<comment type="subcellular location">
    <molecule>Serine protease subunit NS2B</molecule>
    <subcellularLocation>
        <location>Host endoplasmic reticulum membrane</location>
        <topology evidence="4">Multi-pass membrane protein</topology>
    </subcellularLocation>
</comment>
<comment type="subcellular location">
    <molecule>Serine protease NS3</molecule>
    <subcellularLocation>
        <location evidence="16">Host endoplasmic reticulum membrane</location>
        <topology evidence="16">Peripheral membrane protein</topology>
        <orientation evidence="16">Cytoplasmic side</orientation>
    </subcellularLocation>
    <text evidence="16">Remains non-covalently associated to serine protease subunit NS2B.</text>
</comment>
<comment type="subcellular location">
    <molecule>Non-structural protein 4A</molecule>
    <subcellularLocation>
        <location evidence="20">Host endoplasmic reticulum membrane</location>
        <topology evidence="20">Multi-pass membrane protein</topology>
    </subcellularLocation>
    <subcellularLocation>
        <location evidence="4">Host mitochondrion</location>
    </subcellularLocation>
    <text evidence="4">Located in RE-associated vesicles hosting the replication complex. Interacts with host MAVS in the mitochondrion-associated endoplasmic reticulum membranes.</text>
</comment>
<comment type="subcellular location">
    <molecule>Non-structural protein 4B</molecule>
    <subcellularLocation>
        <location evidence="19">Host endoplasmic reticulum membrane</location>
        <topology evidence="19">Multi-pass membrane protein</topology>
    </subcellularLocation>
    <text evidence="9">Located in RE-derived vesicles hosting the replication complex.</text>
</comment>
<comment type="subcellular location">
    <molecule>RNA-directed RNA polymerase NS5</molecule>
    <subcellularLocation>
        <location>Host endoplasmic reticulum membrane</location>
        <topology>Peripheral membrane protein</topology>
        <orientation>Cytoplasmic side</orientation>
    </subcellularLocation>
    <subcellularLocation>
        <location evidence="4">Host nucleus</location>
    </subcellularLocation>
    <text evidence="4">Located in RE-associated vesicles hosting the replication complex. NS5 protein is mainly localized in the nucleus rather than in ER vesicles, especially in the DENV 2, 3, 4 serotypes.</text>
</comment>
<comment type="domain">
    <text evidence="4">The transmembrane domains of the small envelope protein M and envelope protein E contain an endoplasmic reticulum retention signal.</text>
</comment>
<comment type="PTM">
    <molecule>Genome polyprotein</molecule>
    <text evidence="4 22">Specific enzymatic cleavages in vivo yield mature proteins. Cleavages in the lumen of endoplasmic reticulum are performed by host signal peptidase, whereas cleavages in the cytoplasmic side are performed by serine protease NS3. Signal cleavage at the 2K-4B site requires a prior NS3 protease-mediated cleavage at the 4A-2K site.</text>
</comment>
<comment type="PTM">
    <molecule>Protein prM</molecule>
    <text evidence="4">Cleaved in post-Golgi vesicles by a host furin, releasing the mature small envelope protein M, and peptide pr. This cleavage is incomplete as up to 30% of viral particles still carry uncleaved prM.</text>
</comment>
<comment type="PTM">
    <molecule>Envelope protein E</molecule>
    <text evidence="4">N-glycosylated.</text>
</comment>
<comment type="PTM">
    <molecule>Non-structural protein 1</molecule>
    <text evidence="4">N-glycosylated. The excreted form is glycosylated and this is required for efficient secretion of the protein from infected cells.</text>
</comment>
<comment type="PTM">
    <molecule>Serine protease NS3</molecule>
    <text evidence="7">Acetylated by host KAT5. Acetylation modulates NS3 RNA-binding and unwinding activities and plays an important positive role for viral replication.</text>
</comment>
<comment type="PTM">
    <molecule>RNA-directed RNA polymerase NS5</molecule>
    <text evidence="5">Sumoylation of RNA-directed RNA polymerase NS5 increases NS5 protein stability allowing proper viral RNA replication.</text>
</comment>
<comment type="PTM">
    <molecule>RNA-directed RNA polymerase NS5</molecule>
    <text evidence="4 23">Phosphorylated on serines residues (PubMed:7642575). This phosphorylation may trigger NS5 nuclear localization.</text>
</comment>
<comment type="similarity">
    <text evidence="17">In the N-terminal section; belongs to the class I-like SAM-binding methyltransferase superfamily. mRNA cap 0-1 NS5-type methyltransferase family.</text>
</comment>
<feature type="chain" id="PRO_0000405216" description="Genome polyprotein">
    <location>
        <begin position="1"/>
        <end position="3391"/>
    </location>
</feature>
<feature type="chain" id="PRO_0000037958" description="Capsid protein C" evidence="5">
    <location>
        <begin position="1"/>
        <end position="100"/>
    </location>
</feature>
<feature type="propeptide" id="PRO_0000261388" description="ER anchor for the capsid protein C, removed in mature form by serine protease NS3" evidence="5">
    <location>
        <begin position="101"/>
        <end position="114"/>
    </location>
</feature>
<feature type="chain" id="PRO_0000261389" description="Protein prM" evidence="5">
    <location>
        <begin position="115"/>
        <end position="280"/>
    </location>
</feature>
<feature type="chain" id="PRO_0000037959" description="Peptide pr" evidence="5">
    <location>
        <begin position="115"/>
        <end position="205"/>
    </location>
</feature>
<feature type="chain" id="PRO_0000037960" description="Small envelope protein M" evidence="5">
    <location>
        <begin position="206"/>
        <end position="280"/>
    </location>
</feature>
<feature type="chain" id="PRO_0000037961" description="Envelope protein E" evidence="22">
    <location>
        <begin position="281"/>
        <end position="775"/>
    </location>
</feature>
<feature type="chain" id="PRO_0000037962" description="Non-structural protein 1" evidence="5">
    <location>
        <begin position="776"/>
        <end position="1127"/>
    </location>
</feature>
<feature type="chain" id="PRO_0000037963" description="Non-structural protein 2A" evidence="5">
    <location>
        <begin position="1128"/>
        <end position="1345"/>
    </location>
</feature>
<feature type="chain" id="PRO_0000037964" description="Serine protease subunit NS2B" evidence="5">
    <location>
        <begin position="1346"/>
        <end position="1475"/>
    </location>
</feature>
<feature type="chain" id="PRO_0000037965" description="Serine protease NS3" evidence="5">
    <location>
        <begin position="1476"/>
        <end position="2093"/>
    </location>
</feature>
<feature type="chain" id="PRO_0000037966" description="Non-structural protein 4A" evidence="5">
    <location>
        <begin position="2094"/>
        <end position="2220"/>
    </location>
</feature>
<feature type="peptide" id="PRO_0000261391" description="Peptide 2k" evidence="5">
    <location>
        <begin position="2221"/>
        <end position="2243"/>
    </location>
</feature>
<feature type="chain" id="PRO_0000037967" description="Non-structural protein 4B" evidence="5">
    <location>
        <begin position="2244"/>
        <end position="2491"/>
    </location>
</feature>
<feature type="chain" id="PRO_0000037968" description="RNA-directed RNA polymerase NS5" evidence="5">
    <location>
        <begin position="2492"/>
        <end position="3391"/>
    </location>
</feature>
<feature type="topological domain" description="Cytoplasmic" evidence="10">
    <location>
        <begin position="1"/>
        <end position="101"/>
    </location>
</feature>
<feature type="transmembrane region" description="Helical" evidence="10">
    <location>
        <begin position="102"/>
        <end position="122"/>
    </location>
</feature>
<feature type="topological domain" description="Extracellular" evidence="10">
    <location>
        <begin position="123"/>
        <end position="238"/>
    </location>
</feature>
<feature type="transmembrane region" description="Helical" evidence="10">
    <location>
        <begin position="239"/>
        <end position="259"/>
    </location>
</feature>
<feature type="topological domain" description="Cytoplasmic" evidence="10">
    <location>
        <begin position="260"/>
        <end position="265"/>
    </location>
</feature>
<feature type="transmembrane region" description="Helical" evidence="10">
    <location>
        <begin position="266"/>
        <end position="280"/>
    </location>
</feature>
<feature type="topological domain" description="Extracellular" evidence="10">
    <location>
        <begin position="281"/>
        <end position="725"/>
    </location>
</feature>
<feature type="transmembrane region" description="Helical" evidence="10">
    <location>
        <begin position="726"/>
        <end position="746"/>
    </location>
</feature>
<feature type="topological domain" description="Cytoplasmic" evidence="10">
    <location>
        <begin position="747"/>
        <end position="752"/>
    </location>
</feature>
<feature type="transmembrane region" description="Helical" evidence="10">
    <location>
        <begin position="753"/>
        <end position="773"/>
    </location>
</feature>
<feature type="topological domain" description="Extracellular" evidence="10">
    <location>
        <begin position="774"/>
        <end position="1195"/>
    </location>
</feature>
<feature type="transmembrane region" description="Helical" evidence="24">
    <location>
        <begin position="1196"/>
        <end position="1220"/>
    </location>
</feature>
<feature type="topological domain" description="Cytoplasmic" evidence="24">
    <location>
        <begin position="1221"/>
        <end position="1226"/>
    </location>
</feature>
<feature type="transmembrane region" description="Helical" evidence="10 24">
    <location>
        <begin position="1227"/>
        <end position="1245"/>
    </location>
</feature>
<feature type="topological domain" description="Lumenal" evidence="24">
    <location>
        <begin position="1246"/>
        <end position="1269"/>
    </location>
</feature>
<feature type="transmembrane region" description="Helical" evidence="10 24">
    <location>
        <begin position="1270"/>
        <end position="1290"/>
    </location>
</feature>
<feature type="topological domain" description="Cytoplasmic" evidence="24">
    <location>
        <position position="1291"/>
    </location>
</feature>
<feature type="transmembrane region" description="Helical" evidence="10 24">
    <location>
        <begin position="1292"/>
        <end position="1310"/>
    </location>
</feature>
<feature type="topological domain" description="Lumenal" evidence="24">
    <location>
        <begin position="1311"/>
        <end position="1317"/>
    </location>
</feature>
<feature type="transmembrane region" description="Helical" evidence="10 24">
    <location>
        <begin position="1318"/>
        <end position="1338"/>
    </location>
</feature>
<feature type="topological domain" description="Cytoplasmic" evidence="10">
    <location>
        <begin position="1339"/>
        <end position="1346"/>
    </location>
</feature>
<feature type="transmembrane region" description="Helical" evidence="10">
    <location>
        <begin position="1347"/>
        <end position="1367"/>
    </location>
</feature>
<feature type="topological domain" description="Lumenal" evidence="10">
    <location>
        <begin position="1368"/>
        <end position="1370"/>
    </location>
</feature>
<feature type="transmembrane region" description="Helical" evidence="10">
    <location>
        <begin position="1371"/>
        <end position="1391"/>
    </location>
</feature>
<feature type="topological domain" description="Cytoplasmic" evidence="10">
    <location>
        <begin position="1392"/>
        <end position="1447"/>
    </location>
</feature>
<feature type="intramembrane region" description="Helical" evidence="10">
    <location>
        <begin position="1448"/>
        <end position="1468"/>
    </location>
</feature>
<feature type="topological domain" description="Cytoplasmic" evidence="10">
    <location>
        <begin position="1469"/>
        <end position="2147"/>
    </location>
</feature>
<feature type="transmembrane region" description="Helical" evidence="25">
    <location>
        <begin position="2148"/>
        <end position="2168"/>
    </location>
</feature>
<feature type="topological domain" description="Lumenal" evidence="25">
    <location>
        <begin position="2169"/>
        <end position="2170"/>
    </location>
</feature>
<feature type="intramembrane region" description="Helical" evidence="25">
    <location>
        <begin position="2171"/>
        <end position="2191"/>
    </location>
</feature>
<feature type="topological domain" description="Lumenal" evidence="25">
    <location>
        <position position="2192"/>
    </location>
</feature>
<feature type="transmembrane region" description="Helical" evidence="25">
    <location>
        <begin position="2193"/>
        <end position="2213"/>
    </location>
</feature>
<feature type="topological domain" description="Cytoplasmic" evidence="10">
    <location>
        <begin position="2214"/>
        <end position="2228"/>
    </location>
</feature>
<feature type="transmembrane region" description="Helical; Note=Signal for NS4B" evidence="10">
    <location>
        <begin position="2229"/>
        <end position="2249"/>
    </location>
</feature>
<feature type="topological domain" description="Lumenal" evidence="10">
    <location>
        <begin position="2250"/>
        <end position="2274"/>
    </location>
</feature>
<feature type="intramembrane region" description="Helical" evidence="10">
    <location>
        <begin position="2275"/>
        <end position="2295"/>
    </location>
</feature>
<feature type="topological domain" description="Lumenal" evidence="10">
    <location>
        <begin position="2296"/>
        <end position="2316"/>
    </location>
</feature>
<feature type="intramembrane region" description="Helical" evidence="10">
    <location>
        <begin position="2317"/>
        <end position="2337"/>
    </location>
</feature>
<feature type="topological domain" description="Lumenal" evidence="10">
    <location>
        <begin position="2338"/>
        <end position="2347"/>
    </location>
</feature>
<feature type="transmembrane region" description="Helical" evidence="10">
    <location>
        <begin position="2348"/>
        <end position="2368"/>
    </location>
</feature>
<feature type="topological domain" description="Cytoplasmic" evidence="10">
    <location>
        <begin position="2369"/>
        <end position="2413"/>
    </location>
</feature>
<feature type="transmembrane region" description="Helical" evidence="10">
    <location>
        <begin position="2414"/>
        <end position="2434"/>
    </location>
</feature>
<feature type="topological domain" description="Lumenal" evidence="10">
    <location>
        <begin position="2435"/>
        <end position="2459"/>
    </location>
</feature>
<feature type="transmembrane region" description="Helical" evidence="10">
    <location>
        <begin position="2460"/>
        <end position="2480"/>
    </location>
</feature>
<feature type="topological domain" description="Cytoplasmic" evidence="10">
    <location>
        <begin position="2481"/>
        <end position="3391"/>
    </location>
</feature>
<feature type="domain" description="Peptidase S7" evidence="16">
    <location>
        <begin position="1476"/>
        <end position="1653"/>
    </location>
</feature>
<feature type="domain" description="Helicase ATP-binding" evidence="13">
    <location>
        <begin position="1655"/>
        <end position="1811"/>
    </location>
</feature>
<feature type="domain" description="Helicase C-terminal" evidence="14">
    <location>
        <begin position="1821"/>
        <end position="1988"/>
    </location>
</feature>
<feature type="domain" description="mRNA cap 0-1 NS5-type MT" evidence="17">
    <location>
        <begin position="2493"/>
        <end position="2755"/>
    </location>
</feature>
<feature type="domain" description="RdRp catalytic" evidence="12">
    <location>
        <begin position="3019"/>
        <end position="3168"/>
    </location>
</feature>
<feature type="region of interest" description="Interaction with host EXOC1" evidence="4">
    <location>
        <begin position="1"/>
        <end position="15"/>
    </location>
</feature>
<feature type="region of interest" description="Hydrophobic; homodimerization of capsid protein C" evidence="5">
    <location>
        <begin position="37"/>
        <end position="72"/>
    </location>
</feature>
<feature type="region of interest" description="Fusion peptide" evidence="3">
    <location>
        <begin position="378"/>
        <end position="391"/>
    </location>
</feature>
<feature type="region of interest" description="Interacts with and activates NS3 protease" evidence="15">
    <location>
        <begin position="1398"/>
        <end position="1437"/>
    </location>
</feature>
<feature type="region of interest" description="Important for RNA-binding" evidence="18">
    <location>
        <begin position="1659"/>
        <end position="1662"/>
    </location>
</feature>
<feature type="short sequence motif" description="DEAH box" evidence="13">
    <location>
        <begin position="1759"/>
        <end position="1762"/>
    </location>
</feature>
<feature type="short sequence motif" description="SUMO-interacting motif" evidence="5">
    <location>
        <begin position="2568"/>
        <end position="2571"/>
    </location>
</feature>
<feature type="active site" description="Charge relay system; for serine protease NS3 activity" evidence="16">
    <location>
        <position position="1526"/>
    </location>
</feature>
<feature type="active site" description="Charge relay system; for serine protease NS3 activity" evidence="16">
    <location>
        <position position="1550"/>
    </location>
</feature>
<feature type="active site" description="Charge relay system; for serine protease NS3 activity" evidence="16">
    <location>
        <position position="1610"/>
    </location>
</feature>
<feature type="active site" description="For 2'-O-MTase activity" evidence="8">
    <location>
        <position position="2552"/>
    </location>
</feature>
<feature type="active site" description="For 2'-O-MTase activity" evidence="8">
    <location>
        <position position="2637"/>
    </location>
</feature>
<feature type="active site" description="For 2'-O-MTase activity" evidence="8">
    <location>
        <position position="2672"/>
    </location>
</feature>
<feature type="active site" description="For 2'-O-MTase activity" evidence="8">
    <location>
        <position position="2708"/>
    </location>
</feature>
<feature type="binding site" evidence="13">
    <location>
        <begin position="1668"/>
        <end position="1675"/>
    </location>
    <ligand>
        <name>ATP</name>
        <dbReference type="ChEBI" id="CHEBI:30616"/>
    </ligand>
</feature>
<feature type="binding site" evidence="17">
    <location>
        <position position="2547"/>
    </location>
    <ligand>
        <name>S-adenosyl-L-methionine</name>
        <dbReference type="ChEBI" id="CHEBI:59789"/>
    </ligand>
</feature>
<feature type="binding site" evidence="17">
    <location>
        <position position="2577"/>
    </location>
    <ligand>
        <name>S-adenosyl-L-methionine</name>
        <dbReference type="ChEBI" id="CHEBI:59789"/>
    </ligand>
</feature>
<feature type="binding site" evidence="17">
    <location>
        <position position="2578"/>
    </location>
    <ligand>
        <name>S-adenosyl-L-methionine</name>
        <dbReference type="ChEBI" id="CHEBI:59789"/>
    </ligand>
</feature>
<feature type="binding site" evidence="17">
    <location>
        <position position="2595"/>
    </location>
    <ligand>
        <name>S-adenosyl-L-methionine</name>
        <dbReference type="ChEBI" id="CHEBI:59789"/>
    </ligand>
</feature>
<feature type="binding site" evidence="17">
    <location>
        <position position="2596"/>
    </location>
    <ligand>
        <name>S-adenosyl-L-methionine</name>
        <dbReference type="ChEBI" id="CHEBI:59789"/>
    </ligand>
</feature>
<feature type="binding site" evidence="17">
    <location>
        <position position="2622"/>
    </location>
    <ligand>
        <name>S-adenosyl-L-methionine</name>
        <dbReference type="ChEBI" id="CHEBI:59789"/>
    </ligand>
</feature>
<feature type="binding site" evidence="17">
    <location>
        <position position="2623"/>
    </location>
    <ligand>
        <name>S-adenosyl-L-methionine</name>
        <dbReference type="ChEBI" id="CHEBI:59789"/>
    </ligand>
</feature>
<feature type="binding site" evidence="17">
    <location>
        <position position="2638"/>
    </location>
    <ligand>
        <name>S-adenosyl-L-methionine</name>
        <dbReference type="ChEBI" id="CHEBI:59789"/>
    </ligand>
</feature>
<feature type="binding site" evidence="17">
    <location>
        <position position="2710"/>
    </location>
    <ligand>
        <name>S-adenosyl-L-methionine</name>
        <dbReference type="ChEBI" id="CHEBI:59789"/>
    </ligand>
</feature>
<feature type="binding site" evidence="8">
    <location>
        <position position="2929"/>
    </location>
    <ligand>
        <name>Zn(2+)</name>
        <dbReference type="ChEBI" id="CHEBI:29105"/>
        <label>1</label>
    </ligand>
</feature>
<feature type="binding site" evidence="8">
    <location>
        <position position="2933"/>
    </location>
    <ligand>
        <name>Zn(2+)</name>
        <dbReference type="ChEBI" id="CHEBI:29105"/>
        <label>1</label>
    </ligand>
</feature>
<feature type="binding site" evidence="8">
    <location>
        <position position="2938"/>
    </location>
    <ligand>
        <name>Zn(2+)</name>
        <dbReference type="ChEBI" id="CHEBI:29105"/>
        <label>1</label>
    </ligand>
</feature>
<feature type="binding site" evidence="8">
    <location>
        <position position="2941"/>
    </location>
    <ligand>
        <name>Zn(2+)</name>
        <dbReference type="ChEBI" id="CHEBI:29105"/>
        <label>1</label>
    </ligand>
</feature>
<feature type="binding site" evidence="8">
    <location>
        <position position="3203"/>
    </location>
    <ligand>
        <name>Zn(2+)</name>
        <dbReference type="ChEBI" id="CHEBI:29105"/>
        <label>2</label>
    </ligand>
</feature>
<feature type="binding site" evidence="8">
    <location>
        <position position="3219"/>
    </location>
    <ligand>
        <name>Zn(2+)</name>
        <dbReference type="ChEBI" id="CHEBI:29105"/>
        <label>2</label>
    </ligand>
</feature>
<feature type="binding site" evidence="8">
    <location>
        <position position="3338"/>
    </location>
    <ligand>
        <name>Zn(2+)</name>
        <dbReference type="ChEBI" id="CHEBI:29105"/>
        <label>2</label>
    </ligand>
</feature>
<feature type="site" description="Cleavage; by viral protease NS3" evidence="5">
    <location>
        <begin position="100"/>
        <end position="101"/>
    </location>
</feature>
<feature type="site" description="Cleavage; by host signal peptidase" evidence="5">
    <location>
        <begin position="114"/>
        <end position="115"/>
    </location>
</feature>
<feature type="site" description="Cleavage; by host furin" evidence="5 10">
    <location>
        <begin position="205"/>
        <end position="206"/>
    </location>
</feature>
<feature type="site" description="Cleavage; by host signal peptidase" evidence="22">
    <location>
        <begin position="280"/>
        <end position="281"/>
    </location>
</feature>
<feature type="site" description="Cleavage; by host signal peptidase" evidence="22">
    <location>
        <begin position="775"/>
        <end position="776"/>
    </location>
</feature>
<feature type="site" description="Cleavage; by host" evidence="5">
    <location>
        <begin position="1127"/>
        <end position="1128"/>
    </location>
</feature>
<feature type="site" description="Cleavage; by viral protease NS3" evidence="5">
    <location>
        <begin position="1345"/>
        <end position="1346"/>
    </location>
</feature>
<feature type="site" description="Cleavage; by autolysis" evidence="22">
    <location>
        <begin position="1475"/>
        <end position="1476"/>
    </location>
</feature>
<feature type="site" description="Involved in NS3 ATPase and RTPase activities" evidence="2">
    <location>
        <position position="1932"/>
    </location>
</feature>
<feature type="site" description="Involved in NS3 ATPase and RTPase activities" evidence="2">
    <location>
        <position position="1935"/>
    </location>
</feature>
<feature type="site" description="Cleavage; by autolysis" evidence="5">
    <location>
        <begin position="2093"/>
        <end position="2094"/>
    </location>
</feature>
<feature type="site" description="Cleavage; by viral protease NS3" evidence="5">
    <location>
        <begin position="2220"/>
        <end position="2221"/>
    </location>
</feature>
<feature type="site" description="Cleavage; by host signal peptidase" evidence="5">
    <location>
        <begin position="2243"/>
        <end position="2244"/>
    </location>
</feature>
<feature type="site" description="Cleavage; by viral protease NS3" evidence="22">
    <location>
        <begin position="2491"/>
        <end position="2492"/>
    </location>
</feature>
<feature type="site" description="mRNA cap binding" evidence="17">
    <location>
        <position position="2505"/>
    </location>
</feature>
<feature type="site" description="mRNA cap binding; via carbonyl oxygen" evidence="17">
    <location>
        <position position="2508"/>
    </location>
</feature>
<feature type="site" description="mRNA cap binding" evidence="17">
    <location>
        <position position="2509"/>
    </location>
</feature>
<feature type="site" description="mRNA cap binding; via carbonyl oxygen" evidence="17">
    <location>
        <position position="2511"/>
    </location>
</feature>
<feature type="site" description="mRNA cap binding" evidence="17">
    <location>
        <position position="2516"/>
    </location>
</feature>
<feature type="site" description="mRNA cap binding" evidence="17">
    <location>
        <position position="2520"/>
    </location>
</feature>
<feature type="site" description="Essential for 2'-O-methyltransferase activity" evidence="17">
    <location>
        <position position="2552"/>
    </location>
</feature>
<feature type="site" description="Essential for 2'-O-methyltransferase and N-7 methyltransferase activity" evidence="17">
    <location>
        <position position="2637"/>
    </location>
</feature>
<feature type="site" description="mRNA cap binding" evidence="17">
    <location>
        <position position="2641"/>
    </location>
</feature>
<feature type="site" description="Essential for 2'-O-methyltransferase activity" evidence="17">
    <location>
        <position position="2672"/>
    </location>
</feature>
<feature type="site" description="mRNA cap binding" evidence="17">
    <location>
        <position position="2703"/>
    </location>
</feature>
<feature type="site" description="mRNA cap binding" evidence="17">
    <location>
        <position position="2705"/>
    </location>
</feature>
<feature type="site" description="Essential for 2'-O-methyltransferase activity" evidence="17">
    <location>
        <position position="2708"/>
    </location>
</feature>
<feature type="modified residue" description="N6-acetyllysine; by host" evidence="7">
    <location>
        <position position="1863"/>
    </location>
</feature>
<feature type="modified residue" description="Phosphoserine" evidence="1">
    <location>
        <position position="2547"/>
    </location>
</feature>
<feature type="glycosylation site" description="N-linked (GlcNAc...) asparagine; by host" evidence="11">
    <location>
        <position position="183"/>
    </location>
</feature>
<feature type="glycosylation site" description="N-linked (GlcNAc...) asparagine; by host" evidence="11">
    <location>
        <position position="347"/>
    </location>
</feature>
<feature type="glycosylation site" description="N-linked (GlcNAc...) asparagine; by host" evidence="11">
    <location>
        <position position="433"/>
    </location>
</feature>
<feature type="glycosylation site" description="N-linked (GlcNAc...) asparagine; by host" evidence="11">
    <location>
        <position position="905"/>
    </location>
</feature>
<feature type="glycosylation site" description="N-linked (GlcNAc...) asparagine; by host">
    <location>
        <position position="982"/>
    </location>
</feature>
<feature type="glycosylation site" description="N-linked (GlcNAc...) asparagine; by host" evidence="11">
    <location>
        <position position="2301"/>
    </location>
</feature>
<feature type="glycosylation site" description="N-linked (GlcNAc...) asparagine; by host" evidence="11">
    <location>
        <position position="2305"/>
    </location>
</feature>
<feature type="glycosylation site" description="N-linked (GlcNAc...) asparagine; by host" evidence="11">
    <location>
        <position position="2457"/>
    </location>
</feature>
<feature type="disulfide bond" evidence="4">
    <location>
        <begin position="283"/>
        <end position="310"/>
    </location>
</feature>
<feature type="disulfide bond" evidence="4">
    <location>
        <begin position="340"/>
        <end position="401"/>
    </location>
</feature>
<feature type="disulfide bond" evidence="4">
    <location>
        <begin position="354"/>
        <end position="385"/>
    </location>
</feature>
<feature type="disulfide bond" evidence="4">
    <location>
        <begin position="372"/>
        <end position="396"/>
    </location>
</feature>
<feature type="disulfide bond" evidence="4">
    <location>
        <begin position="465"/>
        <end position="565"/>
    </location>
</feature>
<feature type="disulfide bond" evidence="4">
    <location>
        <begin position="582"/>
        <end position="613"/>
    </location>
</feature>
<feature type="disulfide bond" evidence="4">
    <location>
        <begin position="779"/>
        <end position="790"/>
    </location>
</feature>
<feature type="disulfide bond" evidence="4">
    <location>
        <begin position="830"/>
        <end position="918"/>
    </location>
</feature>
<feature type="disulfide bond" evidence="4">
    <location>
        <begin position="954"/>
        <end position="998"/>
    </location>
</feature>
<feature type="disulfide bond" evidence="4">
    <location>
        <begin position="1055"/>
        <end position="1104"/>
    </location>
</feature>
<feature type="disulfide bond" evidence="4">
    <location>
        <begin position="1066"/>
        <end position="1088"/>
    </location>
</feature>
<feature type="disulfide bond" evidence="4">
    <location>
        <begin position="1087"/>
        <end position="1091"/>
    </location>
</feature>
<feature type="mutagenesis site" description="Complete loss of RNA-stimulated NTPase activity." evidence="18">
    <original>RKRK</original>
    <variation>QNGN</variation>
    <location>
        <begin position="1659"/>
        <end position="1662"/>
    </location>
</feature>
<feature type="helix" evidence="27">
    <location>
        <begin position="2765"/>
        <end position="2778"/>
    </location>
</feature>
<feature type="turn" evidence="27">
    <location>
        <begin position="2779"/>
        <end position="2782"/>
    </location>
</feature>
<feature type="strand" evidence="27">
    <location>
        <begin position="2792"/>
        <end position="2801"/>
    </location>
</feature>
<feature type="helix" evidence="27">
    <location>
        <begin position="2814"/>
        <end position="2819"/>
    </location>
</feature>
<feature type="helix" evidence="27">
    <location>
        <begin position="2821"/>
        <end position="2825"/>
    </location>
</feature>
<feature type="helix" evidence="27">
    <location>
        <begin position="2827"/>
        <end position="2831"/>
    </location>
</feature>
<feature type="helix" evidence="27">
    <location>
        <begin position="2839"/>
        <end position="2848"/>
    </location>
</feature>
<feature type="helix" evidence="27">
    <location>
        <begin position="2859"/>
        <end position="2876"/>
    </location>
</feature>
<feature type="helix" evidence="27">
    <location>
        <begin position="2887"/>
        <end position="2894"/>
    </location>
</feature>
<feature type="strand" evidence="26">
    <location>
        <begin position="2895"/>
        <end position="2897"/>
    </location>
</feature>
<feature type="helix" evidence="27">
    <location>
        <begin position="2913"/>
        <end position="2918"/>
    </location>
</feature>
<feature type="helix" evidence="27">
    <location>
        <begin position="2920"/>
        <end position="2934"/>
    </location>
</feature>
<feature type="strand" evidence="27">
    <location>
        <begin position="2943"/>
        <end position="2945"/>
    </location>
</feature>
<feature type="strand" evidence="27">
    <location>
        <begin position="2966"/>
        <end position="2968"/>
    </location>
</feature>
<feature type="helix" evidence="27">
    <location>
        <begin position="2970"/>
        <end position="2980"/>
    </location>
</feature>
<feature type="helix" evidence="27">
    <location>
        <begin position="2982"/>
        <end position="2985"/>
    </location>
</feature>
<feature type="turn" evidence="27">
    <location>
        <begin position="2986"/>
        <end position="2989"/>
    </location>
</feature>
<feature type="helix" evidence="27">
    <location>
        <begin position="2991"/>
        <end position="2994"/>
    </location>
</feature>
<feature type="strand" evidence="27">
    <location>
        <begin position="2995"/>
        <end position="2997"/>
    </location>
</feature>
<feature type="helix" evidence="27">
    <location>
        <begin position="3003"/>
        <end position="3014"/>
    </location>
</feature>
<feature type="strand" evidence="27">
    <location>
        <begin position="3016"/>
        <end position="3019"/>
    </location>
</feature>
<feature type="helix" evidence="27">
    <location>
        <begin position="3029"/>
        <end position="3032"/>
    </location>
</feature>
<feature type="helix" evidence="27">
    <location>
        <begin position="3035"/>
        <end position="3042"/>
    </location>
</feature>
<feature type="helix" evidence="27">
    <location>
        <begin position="3043"/>
        <end position="3047"/>
    </location>
</feature>
<feature type="helix" evidence="27">
    <location>
        <begin position="3050"/>
        <end position="3062"/>
    </location>
</feature>
<feature type="strand" evidence="27">
    <location>
        <begin position="3065"/>
        <end position="3075"/>
    </location>
</feature>
<feature type="strand" evidence="27">
    <location>
        <begin position="3078"/>
        <end position="3088"/>
    </location>
</feature>
<feature type="helix" evidence="27">
    <location>
        <begin position="3097"/>
        <end position="3116"/>
    </location>
</feature>
<feature type="helix" evidence="27">
    <location>
        <begin position="3128"/>
        <end position="3146"/>
    </location>
</feature>
<feature type="strand" evidence="27">
    <location>
        <begin position="3149"/>
        <end position="3152"/>
    </location>
</feature>
<feature type="strand" evidence="27">
    <location>
        <begin position="3155"/>
        <end position="3158"/>
    </location>
</feature>
<feature type="helix" evidence="27">
    <location>
        <begin position="3163"/>
        <end position="3167"/>
    </location>
</feature>
<feature type="helix" evidence="27">
    <location>
        <begin position="3170"/>
        <end position="3174"/>
    </location>
</feature>
<feature type="strand" evidence="27">
    <location>
        <begin position="3191"/>
        <end position="3193"/>
    </location>
</feature>
<feature type="helix" evidence="27">
    <location>
        <begin position="3194"/>
        <end position="3196"/>
    </location>
</feature>
<feature type="strand" evidence="27">
    <location>
        <begin position="3202"/>
        <end position="3208"/>
    </location>
</feature>
<feature type="strand" evidence="27">
    <location>
        <begin position="3214"/>
        <end position="3219"/>
    </location>
</feature>
<feature type="helix" evidence="27">
    <location>
        <begin position="3222"/>
        <end position="3229"/>
    </location>
</feature>
<feature type="strand" evidence="27">
    <location>
        <begin position="3233"/>
        <end position="3236"/>
    </location>
</feature>
<feature type="helix" evidence="27">
    <location>
        <begin position="3239"/>
        <end position="3256"/>
    </location>
</feature>
<feature type="helix" evidence="27">
    <location>
        <begin position="3261"/>
        <end position="3273"/>
    </location>
</feature>
<feature type="strand" evidence="26">
    <location>
        <begin position="3295"/>
        <end position="3298"/>
    </location>
</feature>
<feature type="helix" evidence="27">
    <location>
        <begin position="3300"/>
        <end position="3308"/>
    </location>
</feature>
<feature type="turn" evidence="27">
    <location>
        <begin position="3309"/>
        <end position="3311"/>
    </location>
</feature>
<feature type="helix" evidence="27">
    <location>
        <begin position="3324"/>
        <end position="3326"/>
    </location>
</feature>
<feature type="helix" evidence="27">
    <location>
        <begin position="3332"/>
        <end position="3335"/>
    </location>
</feature>
<feature type="turn" evidence="27">
    <location>
        <begin position="3336"/>
        <end position="3339"/>
    </location>
</feature>
<feature type="helix" evidence="27">
    <location>
        <begin position="3345"/>
        <end position="3352"/>
    </location>
</feature>
<feature type="helix" evidence="27">
    <location>
        <begin position="3354"/>
        <end position="3365"/>
    </location>
</feature>
<name>POLG_DEN2N</name>
<proteinExistence type="evidence at protein level"/>
<evidence type="ECO:0000250" key="1">
    <source>
        <dbReference type="UniProtKB" id="P03314"/>
    </source>
</evidence>
<evidence type="ECO:0000250" key="2">
    <source>
        <dbReference type="UniProtKB" id="P14335"/>
    </source>
</evidence>
<evidence type="ECO:0000250" key="3">
    <source>
        <dbReference type="UniProtKB" id="P14336"/>
    </source>
</evidence>
<evidence type="ECO:0000250" key="4">
    <source>
        <dbReference type="UniProtKB" id="P17763"/>
    </source>
</evidence>
<evidence type="ECO:0000250" key="5">
    <source>
        <dbReference type="UniProtKB" id="P29990"/>
    </source>
</evidence>
<evidence type="ECO:0000250" key="6">
    <source>
        <dbReference type="UniProtKB" id="P29991"/>
    </source>
</evidence>
<evidence type="ECO:0000250" key="7">
    <source>
        <dbReference type="UniProtKB" id="Q32ZE1"/>
    </source>
</evidence>
<evidence type="ECO:0000250" key="8">
    <source>
        <dbReference type="UniProtKB" id="Q6YMS4"/>
    </source>
</evidence>
<evidence type="ECO:0000250" key="9">
    <source>
        <dbReference type="UniProtKB" id="Q9Q6P4"/>
    </source>
</evidence>
<evidence type="ECO:0000255" key="10"/>
<evidence type="ECO:0000255" key="11">
    <source>
        <dbReference type="PROSITE-ProRule" id="PRU00498"/>
    </source>
</evidence>
<evidence type="ECO:0000255" key="12">
    <source>
        <dbReference type="PROSITE-ProRule" id="PRU00539"/>
    </source>
</evidence>
<evidence type="ECO:0000255" key="13">
    <source>
        <dbReference type="PROSITE-ProRule" id="PRU00541"/>
    </source>
</evidence>
<evidence type="ECO:0000255" key="14">
    <source>
        <dbReference type="PROSITE-ProRule" id="PRU00542"/>
    </source>
</evidence>
<evidence type="ECO:0000255" key="15">
    <source>
        <dbReference type="PROSITE-ProRule" id="PRU00859"/>
    </source>
</evidence>
<evidence type="ECO:0000255" key="16">
    <source>
        <dbReference type="PROSITE-ProRule" id="PRU00860"/>
    </source>
</evidence>
<evidence type="ECO:0000255" key="17">
    <source>
        <dbReference type="PROSITE-ProRule" id="PRU00924"/>
    </source>
</evidence>
<evidence type="ECO:0000269" key="18">
    <source>
    </source>
</evidence>
<evidence type="ECO:0000269" key="19">
    <source>
    </source>
</evidence>
<evidence type="ECO:0000269" key="20">
    <source>
    </source>
</evidence>
<evidence type="ECO:0000269" key="21">
    <source>
    </source>
</evidence>
<evidence type="ECO:0000269" key="22">
    <source>
    </source>
</evidence>
<evidence type="ECO:0000269" key="23">
    <source>
    </source>
</evidence>
<evidence type="ECO:0000303" key="24">
    <source>
    </source>
</evidence>
<evidence type="ECO:0000305" key="25">
    <source>
    </source>
</evidence>
<evidence type="ECO:0007829" key="26">
    <source>
        <dbReference type="PDB" id="6IZX"/>
    </source>
</evidence>
<evidence type="ECO:0007829" key="27">
    <source>
        <dbReference type="PDB" id="6IZY"/>
    </source>
</evidence>
<organismHost>
    <name type="scientific">Aedimorphus</name>
    <dbReference type="NCBI Taxonomy" id="53540"/>
</organismHost>
<organismHost>
    <name type="scientific">Diceromyia</name>
    <dbReference type="NCBI Taxonomy" id="53539"/>
</organismHost>
<organismHost>
    <name type="scientific">Erythrocebus patas</name>
    <name type="common">Red guenon</name>
    <name type="synonym">Cercopithecus patas</name>
    <dbReference type="NCBI Taxonomy" id="9538"/>
</organismHost>
<organismHost>
    <name type="scientific">Homo sapiens</name>
    <name type="common">Human</name>
    <dbReference type="NCBI Taxonomy" id="9606"/>
</organismHost>
<organismHost>
    <name type="scientific">Stegomyia</name>
    <dbReference type="NCBI Taxonomy" id="53541"/>
</organismHost>
<organism>
    <name type="scientific">Dengue virus type 2 (strain Thailand/NGS-C/1944)</name>
    <name type="common">DENV-2</name>
    <dbReference type="NCBI Taxonomy" id="11065"/>
    <lineage>
        <taxon>Viruses</taxon>
        <taxon>Riboviria</taxon>
        <taxon>Orthornavirae</taxon>
        <taxon>Kitrinoviricota</taxon>
        <taxon>Flasuviricetes</taxon>
        <taxon>Amarillovirales</taxon>
        <taxon>Flaviviridae</taxon>
        <taxon>Orthoflavivirus</taxon>
        <taxon>Orthoflavivirus denguei</taxon>
        <taxon>Dengue virus</taxon>
    </lineage>
</organism>
<dbReference type="EC" id="3.4.21.91"/>
<dbReference type="EC" id="3.6.1.15" evidence="9"/>
<dbReference type="EC" id="3.6.4.13" evidence="9"/>
<dbReference type="EC" id="2.1.1.56" evidence="17"/>
<dbReference type="EC" id="2.1.1.57" evidence="17"/>
<dbReference type="EC" id="2.7.7.48" evidence="12"/>
<dbReference type="EMBL" id="M29095">
    <property type="protein sequence ID" value="AAA42941.1"/>
    <property type="molecule type" value="Genomic_RNA"/>
</dbReference>
<dbReference type="PDB" id="3IYA">
    <property type="method" value="EM"/>
    <property type="resolution" value="22.00 A"/>
    <property type="chains" value="A/B/C=281-675, D/E/F=115-195"/>
</dbReference>
<dbReference type="PDB" id="3J27">
    <property type="method" value="EM"/>
    <property type="resolution" value="3.60 A"/>
    <property type="chains" value="A/C/E=281-775, B/D/F=206-280"/>
</dbReference>
<dbReference type="PDB" id="3J2P">
    <property type="method" value="EM"/>
    <property type="resolution" value="3.60 A"/>
    <property type="chains" value="A/C=281-775, B/D=206-280"/>
</dbReference>
<dbReference type="PDB" id="4CBF">
    <property type="method" value="EM"/>
    <property type="resolution" value="4.10 A"/>
    <property type="chains" value="A/C/E=288-721"/>
</dbReference>
<dbReference type="PDB" id="4UIH">
    <property type="method" value="EM"/>
    <property type="resolution" value="20.00 A"/>
    <property type="chains" value="A/B/C=281-775"/>
</dbReference>
<dbReference type="PDB" id="6FLA">
    <property type="method" value="X-ray"/>
    <property type="resolution" value="2.90 A"/>
    <property type="chains" value="G=577-674"/>
</dbReference>
<dbReference type="PDB" id="6FLB">
    <property type="method" value="X-ray"/>
    <property type="resolution" value="2.20 A"/>
    <property type="chains" value="G=578-677"/>
</dbReference>
<dbReference type="PDB" id="6FLC">
    <property type="method" value="X-ray"/>
    <property type="resolution" value="2.00 A"/>
    <property type="chains" value="G/I=577-674"/>
</dbReference>
<dbReference type="PDB" id="6IZX">
    <property type="method" value="X-ray"/>
    <property type="resolution" value="2.43 A"/>
    <property type="chains" value="A=2735-3387"/>
</dbReference>
<dbReference type="PDB" id="6IZY">
    <property type="method" value="X-ray"/>
    <property type="resolution" value="2.11 A"/>
    <property type="chains" value="A=2735-3387"/>
</dbReference>
<dbReference type="PDB" id="9DOF">
    <property type="method" value="EM"/>
    <property type="resolution" value="4.24 A"/>
    <property type="chains" value="D/E/F=115-280"/>
</dbReference>
<dbReference type="PDB" id="9DOG">
    <property type="method" value="EM"/>
    <property type="resolution" value="6.50 A"/>
    <property type="chains" value="D000/D001/D002/D003/D004/D005/D006/D007/D008/D009/D010/D011/D012/D013/D014/D015/D016/D017/D018/D019/D020/D021/D022/D023/E000/E001/E002/E003/E004/E005=115-280"/>
</dbReference>
<dbReference type="PDB" id="9DTT">
    <property type="method" value="EM"/>
    <property type="resolution" value="3.60 A"/>
    <property type="chains" value="A=2492-3391"/>
</dbReference>
<dbReference type="PDBsum" id="3IYA"/>
<dbReference type="PDBsum" id="3J27"/>
<dbReference type="PDBsum" id="3J2P"/>
<dbReference type="PDBsum" id="4CBF"/>
<dbReference type="PDBsum" id="4UIH"/>
<dbReference type="PDBsum" id="6FLA"/>
<dbReference type="PDBsum" id="6FLB"/>
<dbReference type="PDBsum" id="6FLC"/>
<dbReference type="PDBsum" id="6IZX"/>
<dbReference type="PDBsum" id="6IZY"/>
<dbReference type="PDBsum" id="9DOF"/>
<dbReference type="PDBsum" id="9DOG"/>
<dbReference type="PDBsum" id="9DTT"/>
<dbReference type="BMRB" id="P14340"/>
<dbReference type="EMDB" id="EMD-31677"/>
<dbReference type="EMDB" id="EMD-31678"/>
<dbReference type="EMDB" id="EMD-31679"/>
<dbReference type="EMDB" id="EMD-31680"/>
<dbReference type="EMDB" id="EMD-31681"/>
<dbReference type="EMDB" id="EMD-47082"/>
<dbReference type="EMDB" id="EMD-47083"/>
<dbReference type="EMDB" id="EMD-47165"/>
<dbReference type="SASBDB" id="P14340"/>
<dbReference type="SMR" id="P14340"/>
<dbReference type="IntAct" id="P14340">
    <property type="interactions" value="13"/>
</dbReference>
<dbReference type="BindingDB" id="P14340"/>
<dbReference type="MEROPS" id="S07.001"/>
<dbReference type="TCDB" id="1.G.3.1.2">
    <property type="family name" value="the viral pore-forming membrane fusion protein-3 (vmfp3) family"/>
</dbReference>
<dbReference type="iPTMnet" id="P14340"/>
<dbReference type="ABCD" id="P14340">
    <property type="antibodies" value="9 sequenced antibodies"/>
</dbReference>
<dbReference type="EvolutionaryTrace" id="P14340"/>
<dbReference type="PRO" id="PR:P14340"/>
<dbReference type="Proteomes" id="UP000007196">
    <property type="component" value="Genome"/>
</dbReference>
<dbReference type="GO" id="GO:0005576">
    <property type="term" value="C:extracellular region"/>
    <property type="evidence" value="ECO:0007669"/>
    <property type="project" value="UniProtKB-SubCell"/>
</dbReference>
<dbReference type="GO" id="GO:0044167">
    <property type="term" value="C:host cell endoplasmic reticulum membrane"/>
    <property type="evidence" value="ECO:0007669"/>
    <property type="project" value="UniProtKB-SubCell"/>
</dbReference>
<dbReference type="GO" id="GO:0033650">
    <property type="term" value="C:host cell mitochondrion"/>
    <property type="evidence" value="ECO:0007669"/>
    <property type="project" value="UniProtKB-SubCell"/>
</dbReference>
<dbReference type="GO" id="GO:0042025">
    <property type="term" value="C:host cell nucleus"/>
    <property type="evidence" value="ECO:0007669"/>
    <property type="project" value="UniProtKB-SubCell"/>
</dbReference>
<dbReference type="GO" id="GO:0044220">
    <property type="term" value="C:host cell perinuclear region of cytoplasm"/>
    <property type="evidence" value="ECO:0007669"/>
    <property type="project" value="UniProtKB-SubCell"/>
</dbReference>
<dbReference type="GO" id="GO:0016020">
    <property type="term" value="C:membrane"/>
    <property type="evidence" value="ECO:0007669"/>
    <property type="project" value="UniProtKB-KW"/>
</dbReference>
<dbReference type="GO" id="GO:0019028">
    <property type="term" value="C:viral capsid"/>
    <property type="evidence" value="ECO:0007669"/>
    <property type="project" value="UniProtKB-KW"/>
</dbReference>
<dbReference type="GO" id="GO:0019031">
    <property type="term" value="C:viral envelope"/>
    <property type="evidence" value="ECO:0007669"/>
    <property type="project" value="UniProtKB-KW"/>
</dbReference>
<dbReference type="GO" id="GO:0055036">
    <property type="term" value="C:virion membrane"/>
    <property type="evidence" value="ECO:0007669"/>
    <property type="project" value="UniProtKB-SubCell"/>
</dbReference>
<dbReference type="GO" id="GO:0005524">
    <property type="term" value="F:ATP binding"/>
    <property type="evidence" value="ECO:0007669"/>
    <property type="project" value="UniProtKB-KW"/>
</dbReference>
<dbReference type="GO" id="GO:0016887">
    <property type="term" value="F:ATP hydrolysis activity"/>
    <property type="evidence" value="ECO:0007669"/>
    <property type="project" value="RHEA"/>
</dbReference>
<dbReference type="GO" id="GO:0015267">
    <property type="term" value="F:channel activity"/>
    <property type="evidence" value="ECO:0007669"/>
    <property type="project" value="UniProtKB-KW"/>
</dbReference>
<dbReference type="GO" id="GO:0003725">
    <property type="term" value="F:double-stranded RNA binding"/>
    <property type="evidence" value="ECO:0007669"/>
    <property type="project" value="InterPro"/>
</dbReference>
<dbReference type="GO" id="GO:0046872">
    <property type="term" value="F:metal ion binding"/>
    <property type="evidence" value="ECO:0007669"/>
    <property type="project" value="UniProtKB-KW"/>
</dbReference>
<dbReference type="GO" id="GO:0004483">
    <property type="term" value="F:mRNA (nucleoside-2'-O-)-methyltransferase activity"/>
    <property type="evidence" value="ECO:0007669"/>
    <property type="project" value="UniProtKB-EC"/>
</dbReference>
<dbReference type="GO" id="GO:0004482">
    <property type="term" value="F:mRNA 5'-cap (guanine-N7-)-methyltransferase activity"/>
    <property type="evidence" value="ECO:0007669"/>
    <property type="project" value="UniProtKB-EC"/>
</dbReference>
<dbReference type="GO" id="GO:0046983">
    <property type="term" value="F:protein dimerization activity"/>
    <property type="evidence" value="ECO:0007669"/>
    <property type="project" value="InterPro"/>
</dbReference>
<dbReference type="GO" id="GO:0003724">
    <property type="term" value="F:RNA helicase activity"/>
    <property type="evidence" value="ECO:0007669"/>
    <property type="project" value="UniProtKB-EC"/>
</dbReference>
<dbReference type="GO" id="GO:0003968">
    <property type="term" value="F:RNA-directed RNA polymerase activity"/>
    <property type="evidence" value="ECO:0007669"/>
    <property type="project" value="UniProtKB-KW"/>
</dbReference>
<dbReference type="GO" id="GO:0004252">
    <property type="term" value="F:serine-type endopeptidase activity"/>
    <property type="evidence" value="ECO:0007669"/>
    <property type="project" value="InterPro"/>
</dbReference>
<dbReference type="GO" id="GO:0005198">
    <property type="term" value="F:structural molecule activity"/>
    <property type="evidence" value="ECO:0007669"/>
    <property type="project" value="InterPro"/>
</dbReference>
<dbReference type="GO" id="GO:0075512">
    <property type="term" value="P:clathrin-dependent endocytosis of virus by host cell"/>
    <property type="evidence" value="ECO:0007669"/>
    <property type="project" value="UniProtKB-KW"/>
</dbReference>
<dbReference type="GO" id="GO:0039654">
    <property type="term" value="P:fusion of virus membrane with host endosome membrane"/>
    <property type="evidence" value="ECO:0007669"/>
    <property type="project" value="UniProtKB-KW"/>
</dbReference>
<dbReference type="GO" id="GO:0034220">
    <property type="term" value="P:monoatomic ion transmembrane transport"/>
    <property type="evidence" value="ECO:0007669"/>
    <property type="project" value="UniProtKB-KW"/>
</dbReference>
<dbReference type="GO" id="GO:0006508">
    <property type="term" value="P:proteolysis"/>
    <property type="evidence" value="ECO:0007669"/>
    <property type="project" value="UniProtKB-KW"/>
</dbReference>
<dbReference type="GO" id="GO:0039520">
    <property type="term" value="P:symbiont-mediated activation of host autophagy"/>
    <property type="evidence" value="ECO:0007669"/>
    <property type="project" value="UniProtKB-KW"/>
</dbReference>
<dbReference type="GO" id="GO:0039545">
    <property type="term" value="P:symbiont-mediated suppression of host cytoplasmic pattern recognition receptor signaling pathway via inhibition of MAVS activity"/>
    <property type="evidence" value="ECO:0007669"/>
    <property type="project" value="UniProtKB-KW"/>
</dbReference>
<dbReference type="GO" id="GO:0039574">
    <property type="term" value="P:symbiont-mediated suppression of host JAK-STAT cascade via inhibition of host TYK2 activity"/>
    <property type="evidence" value="ECO:0007669"/>
    <property type="project" value="UniProtKB-KW"/>
</dbReference>
<dbReference type="GO" id="GO:0039564">
    <property type="term" value="P:symbiont-mediated suppression of host JAK-STAT cascade via inhibition of STAT2 activity"/>
    <property type="evidence" value="ECO:0007669"/>
    <property type="project" value="UniProtKB-KW"/>
</dbReference>
<dbReference type="GO" id="GO:0039502">
    <property type="term" value="P:symbiont-mediated suppression of host type I interferon-mediated signaling pathway"/>
    <property type="evidence" value="ECO:0007669"/>
    <property type="project" value="UniProtKB-KW"/>
</dbReference>
<dbReference type="GO" id="GO:0039694">
    <property type="term" value="P:viral RNA genome replication"/>
    <property type="evidence" value="ECO:0007669"/>
    <property type="project" value="InterPro"/>
</dbReference>
<dbReference type="GO" id="GO:0019062">
    <property type="term" value="P:virion attachment to host cell"/>
    <property type="evidence" value="ECO:0007669"/>
    <property type="project" value="UniProtKB-KW"/>
</dbReference>
<dbReference type="CDD" id="cd20761">
    <property type="entry name" value="capping_2-OMTase_Flaviviridae"/>
    <property type="match status" value="1"/>
</dbReference>
<dbReference type="CDD" id="cd17931">
    <property type="entry name" value="DEXHc_viral_Ns3"/>
    <property type="match status" value="1"/>
</dbReference>
<dbReference type="CDD" id="cd12149">
    <property type="entry name" value="Flavi_E_C"/>
    <property type="match status" value="1"/>
</dbReference>
<dbReference type="CDD" id="cd17038">
    <property type="entry name" value="Flavi_M"/>
    <property type="match status" value="1"/>
</dbReference>
<dbReference type="CDD" id="cd23204">
    <property type="entry name" value="Flavivirus_RdRp"/>
    <property type="match status" value="1"/>
</dbReference>
<dbReference type="CDD" id="cd18806">
    <property type="entry name" value="SF2_C_viral"/>
    <property type="match status" value="1"/>
</dbReference>
<dbReference type="FunFam" id="1.20.1280.260:FF:000001">
    <property type="entry name" value="Envelope glycoprotein"/>
    <property type="match status" value="1"/>
</dbReference>
<dbReference type="FunFam" id="2.60.40.350:FF:000001">
    <property type="entry name" value="Envelope glycoprotein"/>
    <property type="match status" value="1"/>
</dbReference>
<dbReference type="FunFam" id="1.10.10.930:FF:000001">
    <property type="entry name" value="Genome polyprotein"/>
    <property type="match status" value="1"/>
</dbReference>
<dbReference type="FunFam" id="1.10.260.90:FF:000001">
    <property type="entry name" value="Genome polyprotein"/>
    <property type="match status" value="1"/>
</dbReference>
<dbReference type="FunFam" id="2.60.260.50:FF:000001">
    <property type="entry name" value="Genome polyprotein"/>
    <property type="match status" value="1"/>
</dbReference>
<dbReference type="FunFam" id="3.30.70.2840:FF:000001">
    <property type="entry name" value="Genome polyprotein"/>
    <property type="match status" value="1"/>
</dbReference>
<dbReference type="FunFam" id="3.30.70.2840:FF:000002">
    <property type="entry name" value="Genome polyprotein"/>
    <property type="match status" value="1"/>
</dbReference>
<dbReference type="FunFam" id="3.40.50.150:FF:000105">
    <property type="entry name" value="Genome polyprotein"/>
    <property type="match status" value="1"/>
</dbReference>
<dbReference type="FunFam" id="3.40.50.300:FF:000763">
    <property type="entry name" value="Genome polyprotein"/>
    <property type="match status" value="1"/>
</dbReference>
<dbReference type="Gene3D" id="1.10.10.930">
    <property type="match status" value="1"/>
</dbReference>
<dbReference type="Gene3D" id="1.10.260.90">
    <property type="match status" value="1"/>
</dbReference>
<dbReference type="Gene3D" id="1.20.1280.260">
    <property type="match status" value="1"/>
</dbReference>
<dbReference type="Gene3D" id="2.40.10.120">
    <property type="match status" value="2"/>
</dbReference>
<dbReference type="Gene3D" id="2.60.40.350">
    <property type="match status" value="1"/>
</dbReference>
<dbReference type="Gene3D" id="1.10.8.970">
    <property type="entry name" value="Flavivirus envelope glycoprotein M-like"/>
    <property type="match status" value="1"/>
</dbReference>
<dbReference type="Gene3D" id="2.60.260.50">
    <property type="entry name" value="Flavivirus polyprotein propeptide domain"/>
    <property type="match status" value="1"/>
</dbReference>
<dbReference type="Gene3D" id="3.30.70.2840">
    <property type="entry name" value="Flavivirus RNA-directed RNA polymerase, thumb domain"/>
    <property type="match status" value="3"/>
</dbReference>
<dbReference type="Gene3D" id="3.40.50.300">
    <property type="entry name" value="P-loop containing nucleotide triphosphate hydrolases"/>
    <property type="match status" value="2"/>
</dbReference>
<dbReference type="Gene3D" id="2.60.98.10">
    <property type="entry name" value="Tick-borne Encephalitis virus Glycoprotein, domain 1"/>
    <property type="match status" value="1"/>
</dbReference>
<dbReference type="Gene3D" id="2.40.10.10">
    <property type="entry name" value="Trypsin-like serine proteases"/>
    <property type="match status" value="1"/>
</dbReference>
<dbReference type="Gene3D" id="3.40.50.150">
    <property type="entry name" value="Vaccinia Virus protein VP39"/>
    <property type="match status" value="1"/>
</dbReference>
<dbReference type="Gene3D" id="3.30.67.10">
    <property type="entry name" value="Viral Envelope Glycoprotein, domain 2"/>
    <property type="match status" value="1"/>
</dbReference>
<dbReference type="Gene3D" id="3.30.387.10">
    <property type="entry name" value="Viral Envelope Glycoprotein, domain 3"/>
    <property type="match status" value="1"/>
</dbReference>
<dbReference type="InterPro" id="IPR043502">
    <property type="entry name" value="DNA/RNA_pol_sf"/>
</dbReference>
<dbReference type="InterPro" id="IPR000069">
    <property type="entry name" value="Env_glycoprot_M_flavivir"/>
</dbReference>
<dbReference type="InterPro" id="IPR038302">
    <property type="entry name" value="Env_glycoprot_M_sf_flavivir"/>
</dbReference>
<dbReference type="InterPro" id="IPR013755">
    <property type="entry name" value="Flav_gly_cen_dom_subdom1"/>
</dbReference>
<dbReference type="InterPro" id="IPR001122">
    <property type="entry name" value="Flavi_capsidC"/>
</dbReference>
<dbReference type="InterPro" id="IPR037172">
    <property type="entry name" value="Flavi_capsidC_sf"/>
</dbReference>
<dbReference type="InterPro" id="IPR011492">
    <property type="entry name" value="Flavi_DEAD"/>
</dbReference>
<dbReference type="InterPro" id="IPR027287">
    <property type="entry name" value="Flavi_E_Ig-like"/>
</dbReference>
<dbReference type="InterPro" id="IPR026470">
    <property type="entry name" value="Flavi_E_Stem/Anchor_dom"/>
</dbReference>
<dbReference type="InterPro" id="IPR038345">
    <property type="entry name" value="Flavi_E_Stem/Anchor_dom_sf"/>
</dbReference>
<dbReference type="InterPro" id="IPR011998">
    <property type="entry name" value="Flavi_Glycoprot_E_cen/dimer"/>
</dbReference>
<dbReference type="InterPro" id="IPR001157">
    <property type="entry name" value="Flavi_NS1"/>
</dbReference>
<dbReference type="InterPro" id="IPR000752">
    <property type="entry name" value="Flavi_NS2A"/>
</dbReference>
<dbReference type="InterPro" id="IPR000487">
    <property type="entry name" value="Flavi_NS2B"/>
</dbReference>
<dbReference type="InterPro" id="IPR001850">
    <property type="entry name" value="Flavi_NS3_S7"/>
</dbReference>
<dbReference type="InterPro" id="IPR000404">
    <property type="entry name" value="Flavi_NS4A"/>
</dbReference>
<dbReference type="InterPro" id="IPR001528">
    <property type="entry name" value="Flavi_NS4B"/>
</dbReference>
<dbReference type="InterPro" id="IPR046811">
    <property type="entry name" value="Flavi_NS5_thumb"/>
</dbReference>
<dbReference type="InterPro" id="IPR002535">
    <property type="entry name" value="Flavi_propep"/>
</dbReference>
<dbReference type="InterPro" id="IPR038688">
    <property type="entry name" value="Flavi_propep_sf"/>
</dbReference>
<dbReference type="InterPro" id="IPR047530">
    <property type="entry name" value="Flavi_RdRp"/>
</dbReference>
<dbReference type="InterPro" id="IPR000208">
    <property type="entry name" value="Flavi_RdRp_fingers/palm"/>
</dbReference>
<dbReference type="InterPro" id="IPR000336">
    <property type="entry name" value="Flavivir/Alphavir_Ig-like_sf"/>
</dbReference>
<dbReference type="InterPro" id="IPR014412">
    <property type="entry name" value="Gen_Poly_FLV"/>
</dbReference>
<dbReference type="InterPro" id="IPR036253">
    <property type="entry name" value="Glycoprot_cen/dimer_sf"/>
</dbReference>
<dbReference type="InterPro" id="IPR038055">
    <property type="entry name" value="Glycoprot_E_dimer_dom"/>
</dbReference>
<dbReference type="InterPro" id="IPR013756">
    <property type="entry name" value="GlyE_cen_dom_subdom2"/>
</dbReference>
<dbReference type="InterPro" id="IPR014001">
    <property type="entry name" value="Helicase_ATP-bd"/>
</dbReference>
<dbReference type="InterPro" id="IPR001650">
    <property type="entry name" value="Helicase_C-like"/>
</dbReference>
<dbReference type="InterPro" id="IPR014756">
    <property type="entry name" value="Ig_E-set"/>
</dbReference>
<dbReference type="InterPro" id="IPR026490">
    <property type="entry name" value="mRNA_cap_0/1_MeTrfase"/>
</dbReference>
<dbReference type="InterPro" id="IPR049486">
    <property type="entry name" value="NS3-hel_C_flaviviridae"/>
</dbReference>
<dbReference type="InterPro" id="IPR027417">
    <property type="entry name" value="P-loop_NTPase"/>
</dbReference>
<dbReference type="InterPro" id="IPR009003">
    <property type="entry name" value="Peptidase_S1_PA"/>
</dbReference>
<dbReference type="InterPro" id="IPR043504">
    <property type="entry name" value="Peptidase_S1_PA_chymotrypsin"/>
</dbReference>
<dbReference type="InterPro" id="IPR007094">
    <property type="entry name" value="RNA-dir_pol_PSvirus"/>
</dbReference>
<dbReference type="InterPro" id="IPR002877">
    <property type="entry name" value="RNA_MeTrfase_FtsJ_dom"/>
</dbReference>
<dbReference type="InterPro" id="IPR029063">
    <property type="entry name" value="SAM-dependent_MTases_sf"/>
</dbReference>
<dbReference type="NCBIfam" id="TIGR04240">
    <property type="entry name" value="flavi_E_stem"/>
    <property type="match status" value="1"/>
</dbReference>
<dbReference type="Pfam" id="PF20907">
    <property type="entry name" value="Flav_NS3-hel_C"/>
    <property type="match status" value="1"/>
</dbReference>
<dbReference type="Pfam" id="PF01003">
    <property type="entry name" value="Flavi_capsid"/>
    <property type="match status" value="1"/>
</dbReference>
<dbReference type="Pfam" id="PF07652">
    <property type="entry name" value="Flavi_DEAD"/>
    <property type="match status" value="1"/>
</dbReference>
<dbReference type="Pfam" id="PF21659">
    <property type="entry name" value="Flavi_E_stem"/>
    <property type="match status" value="1"/>
</dbReference>
<dbReference type="Pfam" id="PF02832">
    <property type="entry name" value="Flavi_glycop_C"/>
    <property type="match status" value="1"/>
</dbReference>
<dbReference type="Pfam" id="PF00869">
    <property type="entry name" value="Flavi_glycoprot"/>
    <property type="match status" value="1"/>
</dbReference>
<dbReference type="Pfam" id="PF01004">
    <property type="entry name" value="Flavi_M"/>
    <property type="match status" value="1"/>
</dbReference>
<dbReference type="Pfam" id="PF00948">
    <property type="entry name" value="Flavi_NS1"/>
    <property type="match status" value="1"/>
</dbReference>
<dbReference type="Pfam" id="PF01005">
    <property type="entry name" value="Flavi_NS2A"/>
    <property type="match status" value="1"/>
</dbReference>
<dbReference type="Pfam" id="PF01002">
    <property type="entry name" value="Flavi_NS2B"/>
    <property type="match status" value="1"/>
</dbReference>
<dbReference type="Pfam" id="PF01350">
    <property type="entry name" value="Flavi_NS4A"/>
    <property type="match status" value="1"/>
</dbReference>
<dbReference type="Pfam" id="PF01349">
    <property type="entry name" value="Flavi_NS4B"/>
    <property type="match status" value="1"/>
</dbReference>
<dbReference type="Pfam" id="PF00972">
    <property type="entry name" value="Flavi_NS5"/>
    <property type="match status" value="1"/>
</dbReference>
<dbReference type="Pfam" id="PF20483">
    <property type="entry name" value="Flavi_NS5_thumb"/>
    <property type="match status" value="1"/>
</dbReference>
<dbReference type="Pfam" id="PF01570">
    <property type="entry name" value="Flavi_propep"/>
    <property type="match status" value="1"/>
</dbReference>
<dbReference type="Pfam" id="PF01728">
    <property type="entry name" value="FtsJ"/>
    <property type="match status" value="1"/>
</dbReference>
<dbReference type="Pfam" id="PF00949">
    <property type="entry name" value="Peptidase_S7"/>
    <property type="match status" value="1"/>
</dbReference>
<dbReference type="PIRSF" id="PIRSF003817">
    <property type="entry name" value="Gen_Poly_FLV"/>
    <property type="match status" value="1"/>
</dbReference>
<dbReference type="SMART" id="SM00487">
    <property type="entry name" value="DEXDc"/>
    <property type="match status" value="1"/>
</dbReference>
<dbReference type="SMART" id="SM00490">
    <property type="entry name" value="HELICc"/>
    <property type="match status" value="1"/>
</dbReference>
<dbReference type="SUPFAM" id="SSF56672">
    <property type="entry name" value="DNA/RNA polymerases"/>
    <property type="match status" value="1"/>
</dbReference>
<dbReference type="SUPFAM" id="SSF81296">
    <property type="entry name" value="E set domains"/>
    <property type="match status" value="1"/>
</dbReference>
<dbReference type="SUPFAM" id="SSF101257">
    <property type="entry name" value="Flavivirus capsid protein C"/>
    <property type="match status" value="1"/>
</dbReference>
<dbReference type="SUPFAM" id="SSF52540">
    <property type="entry name" value="P-loop containing nucleoside triphosphate hydrolases"/>
    <property type="match status" value="2"/>
</dbReference>
<dbReference type="SUPFAM" id="SSF53335">
    <property type="entry name" value="S-adenosyl-L-methionine-dependent methyltransferases"/>
    <property type="match status" value="1"/>
</dbReference>
<dbReference type="SUPFAM" id="SSF50494">
    <property type="entry name" value="Trypsin-like serine proteases"/>
    <property type="match status" value="1"/>
</dbReference>
<dbReference type="SUPFAM" id="SSF56983">
    <property type="entry name" value="Viral glycoprotein, central and dimerisation domains"/>
    <property type="match status" value="1"/>
</dbReference>
<dbReference type="PROSITE" id="PS51527">
    <property type="entry name" value="FLAVIVIRUS_NS2B"/>
    <property type="match status" value="1"/>
</dbReference>
<dbReference type="PROSITE" id="PS51528">
    <property type="entry name" value="FLAVIVIRUS_NS3PRO"/>
    <property type="match status" value="1"/>
</dbReference>
<dbReference type="PROSITE" id="PS51192">
    <property type="entry name" value="HELICASE_ATP_BIND_1"/>
    <property type="match status" value="1"/>
</dbReference>
<dbReference type="PROSITE" id="PS51194">
    <property type="entry name" value="HELICASE_CTER"/>
    <property type="match status" value="1"/>
</dbReference>
<dbReference type="PROSITE" id="PS50507">
    <property type="entry name" value="RDRP_SSRNA_POS"/>
    <property type="match status" value="1"/>
</dbReference>
<dbReference type="PROSITE" id="PS51591">
    <property type="entry name" value="RNA_CAP01_NS5_MT"/>
    <property type="match status" value="1"/>
</dbReference>
<reference key="1">
    <citation type="journal article" date="1989" name="Gene">
        <title>Sequence analysis of cloned dengue virus type 2 genome (New Guinea-C strain).</title>
        <authorList>
            <person name="Irie K."/>
            <person name="Mohan P.M."/>
            <person name="Sasaguri Y."/>
            <person name="Putnak R."/>
            <person name="Padmanabhan R."/>
        </authorList>
    </citation>
    <scope>NUCLEOTIDE SEQUENCE [GENOMIC RNA]</scope>
</reference>
<reference key="2">
    <citation type="journal article" date="1988" name="Virology">
        <title>Functional and antigenic domains of the dengue-2 virus nonstructural glycoprotein NS-1.</title>
        <authorList>
            <person name="Putnak J.R."/>
            <person name="Charles P.C."/>
            <person name="Padmanabhan R."/>
            <person name="Irie K."/>
            <person name="Hoke C.H."/>
            <person name="Burke D.S."/>
        </authorList>
    </citation>
    <scope>NUCLEOTIDE SEQUENCE [GENOMIC RNA] OF 749-1225</scope>
</reference>
<reference key="3">
    <citation type="journal article" date="1987" name="J. Gen. Virol.">
        <title>Characterization of protease cleavage sites involved in the formation of the envelope glycoprotein and three non-structural proteins of dengue virus type 2, New Guinea C strain.</title>
        <authorList>
            <person name="Biedrzycka A."/>
            <person name="Cauchi M.R."/>
            <person name="Bartholomeusz A."/>
            <person name="Gorman J.J."/>
            <person name="Wright P.J."/>
        </authorList>
    </citation>
    <scope>PROTEOLYTIC PROCESSING (GENOME POLYPROTEIN)</scope>
</reference>
<reference key="4">
    <citation type="journal article" date="1995" name="J. Biol. Chem.">
        <title>Association between NS3 and NS5 proteins of dengue virus type 2 in the putative RNA replicase is linked to differential phosphorylation of NS5.</title>
        <authorList>
            <person name="Kapoor M."/>
            <person name="Zhang L."/>
            <person name="Ramachandra M."/>
            <person name="Kusukawa J."/>
            <person name="Ebner K.E."/>
            <person name="Padmanabhan R."/>
        </authorList>
    </citation>
    <scope>PHOSPHORYLATION (RNA-DIRECTED RNA POLYMERASE NS5)</scope>
</reference>
<reference key="5">
    <citation type="journal article" date="2005" name="J. Biol. Chem.">
        <title>Modulation of the nucleoside triphosphatase/RNA helicase and 5'-RNA triphosphatase activities of Dengue virus type 2 nonstructural protein 3 (NS3) by interaction with NS5, the RNA-dependent RNA polymerase.</title>
        <authorList>
            <person name="Yon C."/>
            <person name="Teramoto T."/>
            <person name="Mueller N."/>
            <person name="Phelan J."/>
            <person name="Ganesh V.K."/>
            <person name="Murthy K.H."/>
            <person name="Padmanabhan R."/>
        </authorList>
    </citation>
    <scope>INTERACTION WITH SERINE PROTEASE NS3 (RNA-DIRECTED RNA POLYMERASE NS5)</scope>
    <scope>INTERACTION WITH RNA-DIRECTED RNA POLYMERASE NS5 (SERINE PROTEASE NS3)</scope>
    <scope>BIOPHYSICOCHEMICAL PROPERTIES (SERINE PROTEASE NS3)</scope>
    <scope>CATALYTIC ACTIVITY (SERINE PROTEASE NS3)</scope>
    <scope>MUTAGENESIS OF 1659-ARG--LYS-1662</scope>
</reference>
<reference key="6">
    <citation type="journal article" date="2006" name="J. Biol. Chem.">
        <title>Subcellular localization and membrane topology of the Dengue virus type 2 Non-structural protein 4B.</title>
        <authorList>
            <person name="Miller S."/>
            <person name="Sparacio S."/>
            <person name="Bartenschlager R."/>
        </authorList>
    </citation>
    <scope>SUBCELLULAR LOCATION (NON-STRUCTURAL PROTEIN 4B)</scope>
    <scope>MEMBRANE TOPOLOGY (NON-STRUCTURAL PROTEIN 4B)</scope>
</reference>
<reference key="7">
    <citation type="journal article" date="2007" name="J. Biol. Chem.">
        <title>The non-structural protein 4A of dengue virus is an integral membrane protein inducing membrane alterations in a 2K-regulated manner.</title>
        <authorList>
            <person name="Miller S."/>
            <person name="Kastner S."/>
            <person name="Krijnse-Locker J."/>
            <person name="Buhler S."/>
            <person name="Bartenschlager R."/>
        </authorList>
    </citation>
    <scope>FUNCTION (NON-STRUCTURAL PROTEIN 4A)</scope>
    <scope>SUBCELLULAR LOCATION (NON-STRUCTURAL PROTEIN 4A)</scope>
    <scope>MEMBRANE TOPOLOGY (NON-STRUCTURAL PROTEIN 4A)</scope>
</reference>
<reference key="8">
    <citation type="journal article" date="2013" name="J. Virol.">
        <title>Membrane topology and function of dengue virus NS2A protein.</title>
        <authorList>
            <person name="Xie X."/>
            <person name="Gayen S."/>
            <person name="Kang C."/>
            <person name="Yuan Z."/>
            <person name="Shi P.Y."/>
        </authorList>
    </citation>
    <scope>SUBCELLULAR LOCATION (NON-STRUCTURAL PROTEIN 2A)</scope>
    <scope>TOPOLOGY (NON-STRUCTURAL PROTEIN 2A)</scope>
</reference>
<keyword id="KW-0002">3D-structure</keyword>
<keyword id="KW-0007">Acetylation</keyword>
<keyword id="KW-1072">Activation of host autophagy by virus</keyword>
<keyword id="KW-0067">ATP-binding</keyword>
<keyword id="KW-0167">Capsid protein</keyword>
<keyword id="KW-1165">Clathrin-mediated endocytosis of virus by host</keyword>
<keyword id="KW-0165">Cleavage on pair of basic residues</keyword>
<keyword id="KW-1015">Disulfide bond</keyword>
<keyword id="KW-1170">Fusion of virus membrane with host endosomal membrane</keyword>
<keyword id="KW-1168">Fusion of virus membrane with host membrane</keyword>
<keyword id="KW-0325">Glycoprotein</keyword>
<keyword id="KW-0347">Helicase</keyword>
<keyword id="KW-1035">Host cytoplasm</keyword>
<keyword id="KW-1038">Host endoplasmic reticulum</keyword>
<keyword id="KW-1043">Host membrane</keyword>
<keyword id="KW-1045">Host mitochondrion</keyword>
<keyword id="KW-1048">Host nucleus</keyword>
<keyword id="KW-0945">Host-virus interaction</keyword>
<keyword id="KW-0378">Hydrolase</keyword>
<keyword id="KW-1090">Inhibition of host innate immune response by virus</keyword>
<keyword id="KW-1114">Inhibition of host interferon signaling pathway by virus</keyword>
<keyword id="KW-1097">Inhibition of host MAVS by virus</keyword>
<keyword id="KW-1113">Inhibition of host RLR pathway by virus</keyword>
<keyword id="KW-1106">Inhibition of host STAT2 by virus</keyword>
<keyword id="KW-1112">Inhibition of host TYK2 by virus</keyword>
<keyword id="KW-0922">Interferon antiviral system evasion</keyword>
<keyword id="KW-0407">Ion channel</keyword>
<keyword id="KW-0406">Ion transport</keyword>
<keyword id="KW-0472">Membrane</keyword>
<keyword id="KW-0479">Metal-binding</keyword>
<keyword id="KW-0489">Methyltransferase</keyword>
<keyword id="KW-0506">mRNA capping</keyword>
<keyword id="KW-0507">mRNA processing</keyword>
<keyword id="KW-0511">Multifunctional enzyme</keyword>
<keyword id="KW-0547">Nucleotide-binding</keyword>
<keyword id="KW-0548">Nucleotidyltransferase</keyword>
<keyword id="KW-0597">Phosphoprotein</keyword>
<keyword id="KW-0645">Protease</keyword>
<keyword id="KW-0694">RNA-binding</keyword>
<keyword id="KW-0696">RNA-directed RNA polymerase</keyword>
<keyword id="KW-0949">S-adenosyl-L-methionine</keyword>
<keyword id="KW-0964">Secreted</keyword>
<keyword id="KW-0720">Serine protease</keyword>
<keyword id="KW-0941">Suppressor of RNA silencing</keyword>
<keyword id="KW-0804">Transcription</keyword>
<keyword id="KW-0805">Transcription regulation</keyword>
<keyword id="KW-0808">Transferase</keyword>
<keyword id="KW-0812">Transmembrane</keyword>
<keyword id="KW-1133">Transmembrane helix</keyword>
<keyword id="KW-0813">Transport</keyword>
<keyword id="KW-0832">Ubl conjugation</keyword>
<keyword id="KW-1161">Viral attachment to host cell</keyword>
<keyword id="KW-0261">Viral envelope protein</keyword>
<keyword id="KW-0899">Viral immunoevasion</keyword>
<keyword id="KW-1182">Viral ion channel</keyword>
<keyword id="KW-1162">Viral penetration into host cytoplasm</keyword>
<keyword id="KW-0693">Viral RNA replication</keyword>
<keyword id="KW-0946">Virion</keyword>
<keyword id="KW-1164">Virus endocytosis by host</keyword>
<keyword id="KW-1160">Virus entry into host cell</keyword>
<keyword id="KW-0862">Zinc</keyword>
<accession>P14340</accession>
<accession>Q66347</accession>
<accession>Q66348</accession>
<accession>Q66349</accession>
<accession>Q66350</accession>
<accession>Q66351</accession>
<accession>Q66352</accession>
<accession>Q66353</accession>
<accession>Q66354</accession>
<accession>Q66355</accession>
<accession>Q66356</accession>
<accession>Q89579</accession>
<protein>
    <recommendedName>
        <fullName>Genome polyprotein</fullName>
    </recommendedName>
    <component>
        <recommendedName>
            <fullName>Capsid protein C</fullName>
        </recommendedName>
        <alternativeName>
            <fullName>Core protein</fullName>
        </alternativeName>
    </component>
    <component>
        <recommendedName>
            <fullName>Protein prM</fullName>
        </recommendedName>
    </component>
    <component>
        <recommendedName>
            <fullName>Peptide pr</fullName>
        </recommendedName>
    </component>
    <component>
        <recommendedName>
            <fullName>Small envelope protein M</fullName>
        </recommendedName>
        <alternativeName>
            <fullName>Matrix protein</fullName>
        </alternativeName>
    </component>
    <component>
        <recommendedName>
            <fullName>Envelope protein E</fullName>
        </recommendedName>
    </component>
    <component>
        <recommendedName>
            <fullName>Non-structural protein 1</fullName>
            <shortName>NS1</shortName>
        </recommendedName>
    </component>
    <component>
        <recommendedName>
            <fullName>Non-structural protein 2A</fullName>
            <shortName>NS2A</shortName>
        </recommendedName>
    </component>
    <component>
        <recommendedName>
            <fullName>Serine protease subunit NS2B</fullName>
        </recommendedName>
        <alternativeName>
            <fullName>Flavivirin protease NS2B regulatory subunit</fullName>
        </alternativeName>
        <alternativeName>
            <fullName>Non-structural protein 2B</fullName>
        </alternativeName>
    </component>
    <component>
        <recommendedName>
            <fullName>Serine protease NS3</fullName>
            <ecNumber>3.4.21.91</ecNumber>
            <ecNumber evidence="9">3.6.1.15</ecNumber>
            <ecNumber evidence="9">3.6.4.13</ecNumber>
        </recommendedName>
        <alternativeName>
            <fullName>Flavivirin protease NS3 catalytic subunit</fullName>
        </alternativeName>
        <alternativeName>
            <fullName>Non-structural protein 3</fullName>
        </alternativeName>
    </component>
    <component>
        <recommendedName>
            <fullName>Non-structural protein 4A</fullName>
            <shortName>NS4A</shortName>
        </recommendedName>
    </component>
    <component>
        <recommendedName>
            <fullName>Peptide 2k</fullName>
        </recommendedName>
    </component>
    <component>
        <recommendedName>
            <fullName>Non-structural protein 4B</fullName>
            <shortName>NS4B</shortName>
        </recommendedName>
    </component>
    <component>
        <recommendedName>
            <fullName>RNA-directed RNA polymerase NS5</fullName>
            <ecNumber evidence="17">2.1.1.56</ecNumber>
            <ecNumber evidence="17">2.1.1.57</ecNumber>
            <ecNumber evidence="12">2.7.7.48</ecNumber>
        </recommendedName>
        <alternativeName>
            <fullName>Non-structural protein 5</fullName>
        </alternativeName>
    </component>
</protein>